<protein>
    <recommendedName>
        <fullName>Sodium/potassium-transporting ATPase subunit alpha-1</fullName>
        <shortName>Na(+)/K(+) ATPase alpha-1 subunit</shortName>
        <ecNumber>7.2.2.13</ecNumber>
    </recommendedName>
    <alternativeName>
        <fullName>Sodium pump subunit alpha-1</fullName>
    </alternativeName>
</protein>
<proteinExistence type="evidence at protein level"/>
<comment type="function">
    <text evidence="3 10 11">This is the catalytic component of the active enzyme, which catalyzes the hydrolysis of ATP coupled with the exchange of sodium and potassium ions across the plasma membrane. This action creates the electrochemical gradient of sodium and potassium ions, providing the energy for active transport of various nutrients (PubMed:29499166, PubMed:30388404). Could also be part of an osmosensory signaling pathway that senses body-fluid sodium levels and controls salt intake behavior as well as voluntary water intake to regulate sodium homeostasis (By similarity).</text>
</comment>
<comment type="catalytic activity">
    <reaction>
        <text>K(+)(out) + Na(+)(in) + ATP + H2O = K(+)(in) + Na(+)(out) + ADP + phosphate + H(+)</text>
        <dbReference type="Rhea" id="RHEA:18353"/>
        <dbReference type="ChEBI" id="CHEBI:15377"/>
        <dbReference type="ChEBI" id="CHEBI:15378"/>
        <dbReference type="ChEBI" id="CHEBI:29101"/>
        <dbReference type="ChEBI" id="CHEBI:29103"/>
        <dbReference type="ChEBI" id="CHEBI:30616"/>
        <dbReference type="ChEBI" id="CHEBI:43474"/>
        <dbReference type="ChEBI" id="CHEBI:456216"/>
        <dbReference type="EC" id="7.2.2.13"/>
    </reaction>
</comment>
<comment type="subunit">
    <text evidence="2 3 6 8 9 16">The sodium/potassium-transporting ATPase is composed of a catalytic alpha subunit, an auxiliary non-catalytic beta subunit and an additional regulatory subunit. Interacts with regulatory subunit FXYD1 (By similarity). Interacts with regulatory subunit FXYD3 (PubMed:21454534). Interacts with SIK1 (By similarity). Binds the HLA class II histocompatibility antigen DR1 (PubMed:1380674). Interacts with SLC35G1 and STIM1 (PubMed:22084111). Interacts with CLN3; this interaction regulates the sodium/potassium-transporting ATPase complex localization at the plasma membrane (Probable). Interacts with SCN7A; activates ATP1A1 P-type sodium:potassium-exchanging transporter activity which indirectly signals to nearby neurons to regulate sodium homeostasis (By similarity).</text>
</comment>
<comment type="interaction">
    <interactant intactId="EBI-358778">
        <id>P05023</id>
    </interactant>
    <interactant intactId="EBI-714630">
        <id>P05026</id>
        <label>ATP1B1</label>
    </interactant>
    <organismsDiffer>false</organismsDiffer>
    <experiments>16</experiments>
</comment>
<comment type="interaction">
    <interactant intactId="EBI-358778">
        <id>P05023</id>
    </interactant>
    <interactant intactId="EBI-716486">
        <id>Q92597</id>
        <label>NDRG1</label>
    </interactant>
    <organismsDiffer>false</organismsDiffer>
    <experiments>2</experiments>
</comment>
<comment type="interaction">
    <interactant intactId="EBI-358778">
        <id>P05023</id>
    </interactant>
    <interactant intactId="EBI-1783169">
        <id>P13693</id>
        <label>TPT1</label>
    </interactant>
    <organismsDiffer>false</organismsDiffer>
    <experiments>5</experiments>
</comment>
<comment type="subcellular location">
    <subcellularLocation>
        <location evidence="3">Cell membrane</location>
        <topology evidence="4">Multi-pass membrane protein</topology>
    </subcellularLocation>
    <subcellularLocation>
        <location evidence="2">Basolateral cell membrane</location>
        <topology evidence="4">Multi-pass membrane protein</topology>
    </subcellularLocation>
    <subcellularLocation>
        <location evidence="12">Cell membrane</location>
        <location evidence="12">Sarcolemma</location>
        <topology evidence="4">Multi-pass membrane protein</topology>
    </subcellularLocation>
    <subcellularLocation>
        <location evidence="2">Cell projection</location>
        <location evidence="2">Axon</location>
    </subcellularLocation>
    <subcellularLocation>
        <location evidence="7">Melanosome</location>
    </subcellularLocation>
    <text evidence="7">Identified by mass spectrometry in melanosome fractions from stage I to stage IV.</text>
</comment>
<comment type="alternative products">
    <event type="alternative splicing"/>
    <isoform>
        <id>P05023-1</id>
        <name>1</name>
        <name>Long</name>
        <sequence type="displayed"/>
    </isoform>
    <isoform>
        <id>P05023-2</id>
        <name>2</name>
        <name>Short</name>
        <sequence type="described" ref="VSP_000415 VSP_000416"/>
    </isoform>
    <isoform>
        <id>P05023-3</id>
        <name>3</name>
        <sequence type="described" ref="VSP_044242"/>
    </isoform>
    <isoform>
        <id>P05023-4</id>
        <name>4</name>
        <sequence type="described" ref="VSP_047309"/>
    </isoform>
</comment>
<comment type="PTM">
    <text evidence="1">Phosphorylation on Tyr-10 modulates pumping activity. Phosphorylation of Ser-943 by PKA modulates the response of ATP1A1 to PKC. Dephosphorylation by protein phosphatase 2A (PP2A) following increases in intracellular sodium, leading to increase catalytic activity (By similarity).</text>
</comment>
<comment type="disease" evidence="10">
    <disease id="DI-05276">
        <name>Charcot-Marie-Tooth disease, axonal, type 2DD</name>
        <acronym>CMT2DD</acronym>
        <description>A dominant axonal form of Charcot-Marie-Tooth disease, a disorder of the peripheral nervous system, characterized by progressive weakness and atrophy, initially of the peroneal muscles and later of the distal muscles of the arms. Charcot-Marie-Tooth disease is classified in two main groups on the basis of electrophysiologic properties and histopathology: primary peripheral demyelinating neuropathies (designated CMT1 when they are dominantly inherited) and primary peripheral axonal neuropathies (CMT2). Neuropathies of the CMT2 group are characterized by signs of axonal degeneration in the absence of obvious myelin alterations, normal or slightly reduced nerve conduction velocities, and progressive distal muscle weakness and atrophy.</description>
        <dbReference type="MIM" id="618036"/>
    </disease>
    <text>The disease is caused by variants affecting the gene represented in this entry.</text>
</comment>
<comment type="disease" evidence="11">
    <disease id="DI-05475">
        <name>Hypomagnesemia, seizures, and impaired intellectual development 2</name>
        <acronym>HOMGSMR2</acronym>
        <description>An autosomal dominant disease characterized by generalized seizures in infancy, severe hypomagnesemia, and renal magnesium wasting. Seizures persist despite magnesium supplementation and are associated with significant intellectual disability.</description>
        <dbReference type="MIM" id="618314"/>
    </disease>
    <text>The disease is caused by variants affecting the gene represented in this entry.</text>
</comment>
<comment type="miscellaneous">
    <molecule>Isoform 2</molecule>
    <text evidence="15">May be produced at very low levels due to a premature stop codon in the mRNA, leading to nonsense-mediated mRNA decay.</text>
</comment>
<comment type="similarity">
    <text evidence="15">Belongs to the cation transport ATPase (P-type) (TC 3.A.3) family. Type IIC subfamily.</text>
</comment>
<dbReference type="EC" id="7.2.2.13"/>
<dbReference type="EMBL" id="D00099">
    <property type="protein sequence ID" value="BAA00061.1"/>
    <property type="molecule type" value="mRNA"/>
</dbReference>
<dbReference type="EMBL" id="X04297">
    <property type="protein sequence ID" value="CAA27840.1"/>
    <property type="molecule type" value="mRNA"/>
</dbReference>
<dbReference type="EMBL" id="U16798">
    <property type="protein sequence ID" value="AAC50131.1"/>
    <property type="molecule type" value="mRNA"/>
</dbReference>
<dbReference type="EMBL" id="AK295095">
    <property type="protein sequence ID" value="BAH11971.1"/>
    <property type="molecule type" value="mRNA"/>
</dbReference>
<dbReference type="EMBL" id="AK296362">
    <property type="protein sequence ID" value="BAH12332.1"/>
    <property type="molecule type" value="mRNA"/>
</dbReference>
<dbReference type="EMBL" id="AK314777">
    <property type="protein sequence ID" value="BAG37313.1"/>
    <property type="molecule type" value="mRNA"/>
</dbReference>
<dbReference type="EMBL" id="AL136376">
    <property type="status" value="NOT_ANNOTATED_CDS"/>
    <property type="molecule type" value="Genomic_DNA"/>
</dbReference>
<dbReference type="EMBL" id="CH471122">
    <property type="protein sequence ID" value="EAW56644.1"/>
    <property type="molecule type" value="Genomic_DNA"/>
</dbReference>
<dbReference type="EMBL" id="BC003077">
    <property type="protein sequence ID" value="AAH03077.1"/>
    <property type="molecule type" value="mRNA"/>
</dbReference>
<dbReference type="EMBL" id="BC001330">
    <property type="protein sequence ID" value="AAH01330.1"/>
    <property type="molecule type" value="mRNA"/>
</dbReference>
<dbReference type="EMBL" id="BC050359">
    <property type="protein sequence ID" value="AAH50359.1"/>
    <property type="molecule type" value="mRNA"/>
</dbReference>
<dbReference type="EMBL" id="M30310">
    <property type="protein sequence ID" value="AAA51801.1"/>
    <property type="molecule type" value="Genomic_DNA"/>
</dbReference>
<dbReference type="EMBL" id="M30309">
    <property type="protein sequence ID" value="AAA51801.1"/>
    <property type="status" value="JOINED"/>
    <property type="molecule type" value="Genomic_DNA"/>
</dbReference>
<dbReference type="EMBL" id="L76938">
    <property type="protein sequence ID" value="AAA92713.1"/>
    <property type="molecule type" value="Genomic_DNA"/>
</dbReference>
<dbReference type="EMBL" id="M16793">
    <property type="protein sequence ID" value="AAD56251.1"/>
    <property type="molecule type" value="mRNA"/>
</dbReference>
<dbReference type="EMBL" id="M16794">
    <property type="protein sequence ID" value="AAD56252.1"/>
    <property type="molecule type" value="mRNA"/>
</dbReference>
<dbReference type="EMBL" id="J03007">
    <property type="protein sequence ID" value="AAA51803.1"/>
    <property type="molecule type" value="mRNA"/>
</dbReference>
<dbReference type="EMBL" id="M27572">
    <property type="protein sequence ID" value="AAA35573.1"/>
    <property type="molecule type" value="Genomic_DNA"/>
</dbReference>
<dbReference type="EMBL" id="M27579">
    <property type="protein sequence ID" value="AAA35574.2"/>
    <property type="molecule type" value="Genomic_DNA"/>
</dbReference>
<dbReference type="EMBL" id="X03757">
    <property type="protein sequence ID" value="CAA27390.1"/>
    <property type="molecule type" value="mRNA"/>
</dbReference>
<dbReference type="CCDS" id="CCDS53351.1">
    <molecule id="P05023-4"/>
</dbReference>
<dbReference type="CCDS" id="CCDS53352.1">
    <molecule id="P05023-3"/>
</dbReference>
<dbReference type="CCDS" id="CCDS887.1">
    <molecule id="P05023-1"/>
</dbReference>
<dbReference type="PIR" id="A24414">
    <property type="entry name" value="A24414"/>
</dbReference>
<dbReference type="RefSeq" id="NP_000692.2">
    <molecule id="P05023-1"/>
    <property type="nucleotide sequence ID" value="NM_000701.7"/>
</dbReference>
<dbReference type="RefSeq" id="NP_001153705.1">
    <molecule id="P05023-4"/>
    <property type="nucleotide sequence ID" value="NM_001160233.2"/>
</dbReference>
<dbReference type="RefSeq" id="NP_001153706.1">
    <molecule id="P05023-3"/>
    <property type="nucleotide sequence ID" value="NM_001160234.2"/>
</dbReference>
<dbReference type="RefSeq" id="XP_016856849.1">
    <property type="nucleotide sequence ID" value="XM_017001360.1"/>
</dbReference>
<dbReference type="RefSeq" id="XP_016856850.1">
    <property type="nucleotide sequence ID" value="XM_017001361.1"/>
</dbReference>
<dbReference type="PDB" id="7E1Z">
    <property type="method" value="EM"/>
    <property type="resolution" value="3.20 A"/>
    <property type="chains" value="A=1-1023"/>
</dbReference>
<dbReference type="PDB" id="7E20">
    <property type="method" value="EM"/>
    <property type="resolution" value="2.70 A"/>
    <property type="chains" value="A=1-1023"/>
</dbReference>
<dbReference type="PDB" id="7E21">
    <property type="method" value="EM"/>
    <property type="resolution" value="2.90 A"/>
    <property type="chains" value="A=1-1023"/>
</dbReference>
<dbReference type="PDBsum" id="7E1Z"/>
<dbReference type="PDBsum" id="7E20"/>
<dbReference type="PDBsum" id="7E21"/>
<dbReference type="BMRB" id="P05023"/>
<dbReference type="EMDB" id="EMD-30947"/>
<dbReference type="EMDB" id="EMD-30948"/>
<dbReference type="EMDB" id="EMD-30949"/>
<dbReference type="SMR" id="P05023"/>
<dbReference type="BioGRID" id="106966">
    <property type="interactions" value="584"/>
</dbReference>
<dbReference type="ComplexPortal" id="CPX-125">
    <property type="entry name" value="Sodium:potassium-exchanging ATPase complex, FXYD2 variant"/>
</dbReference>
<dbReference type="ComplexPortal" id="CPX-8009">
    <property type="entry name" value="Sodium:potassium-exchanging ATPase complex, FXYD1 variant"/>
</dbReference>
<dbReference type="ComplexPortal" id="CPX-8141">
    <property type="entry name" value="Sodium:potassium-exchanging ATPase complex, FXYD3 variant"/>
</dbReference>
<dbReference type="ComplexPortal" id="CPX-8142">
    <property type="entry name" value="Sodium:potassium-exchanging ATPase complex, FXYD4 variant"/>
</dbReference>
<dbReference type="ComplexPortal" id="CPX-8143">
    <property type="entry name" value="Sodium:potassium-exchanging ATPase complex, FXYD5 variant"/>
</dbReference>
<dbReference type="ComplexPortal" id="CPX-8144">
    <property type="entry name" value="Sodium:potassium-exchanging ATPase complex, FXYD6 variant"/>
</dbReference>
<dbReference type="ComplexPortal" id="CPX-8146">
    <property type="entry name" value="Sodium:potassium-exchanging ATPase complex, FXYD7 variant"/>
</dbReference>
<dbReference type="CORUM" id="P05023"/>
<dbReference type="DIP" id="DIP-38196N"/>
<dbReference type="FunCoup" id="P05023">
    <property type="interactions" value="2069"/>
</dbReference>
<dbReference type="IntAct" id="P05023">
    <property type="interactions" value="180"/>
</dbReference>
<dbReference type="MINT" id="P05023"/>
<dbReference type="STRING" id="9606.ENSP00000445306"/>
<dbReference type="BindingDB" id="P05023"/>
<dbReference type="ChEMBL" id="CHEMBL1807"/>
<dbReference type="DrugBank" id="DB00511">
    <property type="generic name" value="Acetyldigitoxin"/>
</dbReference>
<dbReference type="DrugBank" id="DB01430">
    <property type="generic name" value="Almitrine"/>
</dbReference>
<dbReference type="DrugBank" id="DB01370">
    <property type="generic name" value="Aluminium"/>
</dbReference>
<dbReference type="DrugBank" id="DB14517">
    <property type="generic name" value="Aluminium phosphate"/>
</dbReference>
<dbReference type="DrugBank" id="DB14518">
    <property type="generic name" value="Aluminum acetate"/>
</dbReference>
<dbReference type="DrugBank" id="DB06697">
    <property type="generic name" value="Artemether"/>
</dbReference>
<dbReference type="DrugBank" id="DB01244">
    <property type="generic name" value="Bepridil"/>
</dbReference>
<dbReference type="DrugBank" id="DB09020">
    <property type="generic name" value="Bisacodyl"/>
</dbReference>
<dbReference type="DrugBank" id="DB01158">
    <property type="generic name" value="Bretylium"/>
</dbReference>
<dbReference type="DrugBank" id="DB01161">
    <property type="generic name" value="Chloroprocaine"/>
</dbReference>
<dbReference type="DrugBank" id="DB01188">
    <property type="generic name" value="Ciclopirox"/>
</dbReference>
<dbReference type="DrugBank" id="DB01078">
    <property type="generic name" value="Deslanoside"/>
</dbReference>
<dbReference type="DrugBank" id="DB04177">
    <property type="generic name" value="Digitoxigenin"/>
</dbReference>
<dbReference type="DrugBank" id="DB01396">
    <property type="generic name" value="Digitoxin"/>
</dbReference>
<dbReference type="DrugBank" id="DB00390">
    <property type="generic name" value="Digoxin"/>
</dbReference>
<dbReference type="DrugBank" id="DB00903">
    <property type="generic name" value="Etacrynic acid"/>
</dbReference>
<dbReference type="DrugBank" id="DB00774">
    <property type="generic name" value="Hydroflumethiazide"/>
</dbReference>
<dbReference type="DrugBank" id="DB06157">
    <property type="generic name" value="Istaroxime"/>
</dbReference>
<dbReference type="DrugBank" id="DB06708">
    <property type="generic name" value="Lumefantrine"/>
</dbReference>
<dbReference type="DrugBank" id="DB13996">
    <property type="generic name" value="Magnesium acetate"/>
</dbReference>
<dbReference type="DrugBank" id="DB01378">
    <property type="generic name" value="Magnesium cation"/>
</dbReference>
<dbReference type="DrugBank" id="DB13749">
    <property type="generic name" value="Magnesium gluconate"/>
</dbReference>
<dbReference type="DrugBank" id="DB14515">
    <property type="generic name" value="Magnesium lactate"/>
</dbReference>
<dbReference type="DrugBank" id="DB14514">
    <property type="generic name" value="Magnesium levulinate"/>
</dbReference>
<dbReference type="DrugBank" id="DB12843">
    <property type="generic name" value="Oleandrin"/>
</dbReference>
<dbReference type="DrugBank" id="DB01250">
    <property type="generic name" value="Olsalazine"/>
</dbReference>
<dbReference type="DrugBank" id="DB01092">
    <property type="generic name" value="Ouabain"/>
</dbReference>
<dbReference type="DrugBank" id="DB14500">
    <property type="generic name" value="Potassium"/>
</dbReference>
<dbReference type="DrugBank" id="DB14498">
    <property type="generic name" value="Potassium acetate"/>
</dbReference>
<dbReference type="DrugBank" id="DB01345">
    <property type="generic name" value="Potassium cation"/>
</dbReference>
<dbReference type="DrugBank" id="DB13620">
    <property type="generic name" value="Potassium gluconate"/>
</dbReference>
<dbReference type="DrugBank" id="DB14499">
    <property type="generic name" value="Potassium sulfate"/>
</dbReference>
<dbReference type="DrugBank" id="DB12350">
    <property type="generic name" value="Rostafuroxin"/>
</dbReference>
<dbReference type="DrugBank" id="DB09479">
    <property type="generic name" value="Rubidium Rb-82"/>
</dbReference>
<dbReference type="DrugBank" id="DB16690">
    <property type="generic name" value="Tegoprazan"/>
</dbReference>
<dbReference type="DrugBank" id="DB01021">
    <property type="generic name" value="Trichlormethiazide"/>
</dbReference>
<dbReference type="DrugCentral" id="P05023"/>
<dbReference type="TCDB" id="3.A.3.1.1">
    <property type="family name" value="the p-type atpase (p-atpase) superfamily"/>
</dbReference>
<dbReference type="CarbonylDB" id="P05023"/>
<dbReference type="GlyCosmos" id="P05023">
    <property type="glycosylation" value="1 site, 1 glycan"/>
</dbReference>
<dbReference type="GlyGen" id="P05023">
    <property type="glycosylation" value="2 sites, 1 N-linked glycan (1 site), 1 O-linked glycan (1 site)"/>
</dbReference>
<dbReference type="iPTMnet" id="P05023"/>
<dbReference type="MetOSite" id="P05023"/>
<dbReference type="PhosphoSitePlus" id="P05023"/>
<dbReference type="SwissPalm" id="P05023"/>
<dbReference type="BioMuta" id="ATP1A1"/>
<dbReference type="DMDM" id="114374"/>
<dbReference type="jPOST" id="P05023"/>
<dbReference type="MassIVE" id="P05023"/>
<dbReference type="PaxDb" id="9606-ENSP00000445306"/>
<dbReference type="PeptideAtlas" id="P05023"/>
<dbReference type="ProteomicsDB" id="26208"/>
<dbReference type="ProteomicsDB" id="51768">
    <molecule id="P05023-1"/>
</dbReference>
<dbReference type="ProteomicsDB" id="51769">
    <molecule id="P05023-2"/>
</dbReference>
<dbReference type="ProteomicsDB" id="6547"/>
<dbReference type="Pumba" id="P05023"/>
<dbReference type="Antibodypedia" id="4542">
    <property type="antibodies" value="724 antibodies from 41 providers"/>
</dbReference>
<dbReference type="DNASU" id="476"/>
<dbReference type="Ensembl" id="ENST00000295598.10">
    <molecule id="P05023-1"/>
    <property type="protein sequence ID" value="ENSP00000295598.5"/>
    <property type="gene ID" value="ENSG00000163399.16"/>
</dbReference>
<dbReference type="Ensembl" id="ENST00000369496.8">
    <molecule id="P05023-3"/>
    <property type="protein sequence ID" value="ENSP00000358508.4"/>
    <property type="gene ID" value="ENSG00000163399.16"/>
</dbReference>
<dbReference type="Ensembl" id="ENST00000537345.5">
    <molecule id="P05023-4"/>
    <property type="protein sequence ID" value="ENSP00000445306.1"/>
    <property type="gene ID" value="ENSG00000163399.16"/>
</dbReference>
<dbReference type="GeneID" id="476"/>
<dbReference type="KEGG" id="hsa:476"/>
<dbReference type="MANE-Select" id="ENST00000295598.10">
    <property type="protein sequence ID" value="ENSP00000295598.5"/>
    <property type="RefSeq nucleotide sequence ID" value="NM_000701.8"/>
    <property type="RefSeq protein sequence ID" value="NP_000692.2"/>
</dbReference>
<dbReference type="UCSC" id="uc001ege.5">
    <molecule id="P05023-1"/>
    <property type="organism name" value="human"/>
</dbReference>
<dbReference type="AGR" id="HGNC:799"/>
<dbReference type="CTD" id="476"/>
<dbReference type="DisGeNET" id="476"/>
<dbReference type="GeneCards" id="ATP1A1"/>
<dbReference type="HGNC" id="HGNC:799">
    <property type="gene designation" value="ATP1A1"/>
</dbReference>
<dbReference type="HPA" id="ENSG00000163399">
    <property type="expression patterns" value="Tissue enhanced (parathyroid)"/>
</dbReference>
<dbReference type="MalaCards" id="ATP1A1"/>
<dbReference type="MIM" id="182310">
    <property type="type" value="gene"/>
</dbReference>
<dbReference type="MIM" id="618036">
    <property type="type" value="phenotype"/>
</dbReference>
<dbReference type="MIM" id="618314">
    <property type="type" value="phenotype"/>
</dbReference>
<dbReference type="neXtProt" id="NX_P05023"/>
<dbReference type="OpenTargets" id="ENSG00000163399"/>
<dbReference type="Orphanet" id="521414">
    <property type="disease" value="Autosomal dominant Charcot-Marie-Tooth disease type 2DD"/>
</dbReference>
<dbReference type="Orphanet" id="564178">
    <property type="disease" value="Primary hypomagnesemia-refractory seizures-intellectual disability syndrome"/>
</dbReference>
<dbReference type="PharmGKB" id="PA62"/>
<dbReference type="VEuPathDB" id="HostDB:ENSG00000163399"/>
<dbReference type="eggNOG" id="KOG0203">
    <property type="taxonomic scope" value="Eukaryota"/>
</dbReference>
<dbReference type="GeneTree" id="ENSGT00940000154840"/>
<dbReference type="HOGENOM" id="CLU_002360_4_3_1"/>
<dbReference type="InParanoid" id="P05023"/>
<dbReference type="OMA" id="QQPPIFN"/>
<dbReference type="OrthoDB" id="3352408at2759"/>
<dbReference type="PAN-GO" id="P05023">
    <property type="GO annotations" value="8 GO annotations based on evolutionary models"/>
</dbReference>
<dbReference type="PhylomeDB" id="P05023"/>
<dbReference type="TreeFam" id="TF312838"/>
<dbReference type="BRENDA" id="7.2.2.3">
    <property type="organism ID" value="2681"/>
</dbReference>
<dbReference type="PathwayCommons" id="P05023"/>
<dbReference type="Reactome" id="R-HSA-5578775">
    <property type="pathway name" value="Ion homeostasis"/>
</dbReference>
<dbReference type="Reactome" id="R-HSA-936837">
    <property type="pathway name" value="Ion transport by P-type ATPases"/>
</dbReference>
<dbReference type="Reactome" id="R-HSA-9679191">
    <property type="pathway name" value="Potential therapeutics for SARS"/>
</dbReference>
<dbReference type="SignaLink" id="P05023"/>
<dbReference type="SIGNOR" id="P05023"/>
<dbReference type="BioGRID-ORCS" id="476">
    <property type="hits" value="666 hits in 1200 CRISPR screens"/>
</dbReference>
<dbReference type="CD-CODE" id="FB4E32DD">
    <property type="entry name" value="Presynaptic clusters and postsynaptic densities"/>
</dbReference>
<dbReference type="ChiTaRS" id="ATP1A1">
    <property type="organism name" value="human"/>
</dbReference>
<dbReference type="GeneWiki" id="ATPase,_Na%2B/K%2B_transporting,_alpha_1"/>
<dbReference type="GenomeRNAi" id="476"/>
<dbReference type="Pharos" id="P05023">
    <property type="development level" value="Tclin"/>
</dbReference>
<dbReference type="PRO" id="PR:P05023"/>
<dbReference type="Proteomes" id="UP000005640">
    <property type="component" value="Chromosome 1"/>
</dbReference>
<dbReference type="RNAct" id="P05023">
    <property type="molecule type" value="protein"/>
</dbReference>
<dbReference type="Bgee" id="ENSG00000163399">
    <property type="expression patterns" value="Expressed in renal medulla and 213 other cell types or tissues"/>
</dbReference>
<dbReference type="ExpressionAtlas" id="P05023">
    <property type="expression patterns" value="baseline and differential"/>
</dbReference>
<dbReference type="GO" id="GO:0016324">
    <property type="term" value="C:apical plasma membrane"/>
    <property type="evidence" value="ECO:0000314"/>
    <property type="project" value="ARUK-UCL"/>
</dbReference>
<dbReference type="GO" id="GO:0030424">
    <property type="term" value="C:axon"/>
    <property type="evidence" value="ECO:0007669"/>
    <property type="project" value="UniProtKB-SubCell"/>
</dbReference>
<dbReference type="GO" id="GO:0016323">
    <property type="term" value="C:basolateral plasma membrane"/>
    <property type="evidence" value="ECO:0000250"/>
    <property type="project" value="UniProtKB"/>
</dbReference>
<dbReference type="GO" id="GO:0005783">
    <property type="term" value="C:endoplasmic reticulum"/>
    <property type="evidence" value="ECO:0000250"/>
    <property type="project" value="BHF-UCL"/>
</dbReference>
<dbReference type="GO" id="GO:0070062">
    <property type="term" value="C:extracellular exosome"/>
    <property type="evidence" value="ECO:0007005"/>
    <property type="project" value="UniProtKB"/>
</dbReference>
<dbReference type="GO" id="GO:1903561">
    <property type="term" value="C:extracellular vesicle"/>
    <property type="evidence" value="ECO:0007005"/>
    <property type="project" value="UniProtKB"/>
</dbReference>
<dbReference type="GO" id="GO:0005794">
    <property type="term" value="C:Golgi apparatus"/>
    <property type="evidence" value="ECO:0000250"/>
    <property type="project" value="BHF-UCL"/>
</dbReference>
<dbReference type="GO" id="GO:0016328">
    <property type="term" value="C:lateral plasma membrane"/>
    <property type="evidence" value="ECO:0000314"/>
    <property type="project" value="ARUK-UCL"/>
</dbReference>
<dbReference type="GO" id="GO:0042470">
    <property type="term" value="C:melanosome"/>
    <property type="evidence" value="ECO:0007669"/>
    <property type="project" value="UniProtKB-SubCell"/>
</dbReference>
<dbReference type="GO" id="GO:0016020">
    <property type="term" value="C:membrane"/>
    <property type="evidence" value="ECO:0000250"/>
    <property type="project" value="UniProtKB"/>
</dbReference>
<dbReference type="GO" id="GO:0045121">
    <property type="term" value="C:membrane raft"/>
    <property type="evidence" value="ECO:0000250"/>
    <property type="project" value="ARUK-UCL"/>
</dbReference>
<dbReference type="GO" id="GO:0031090">
    <property type="term" value="C:organelle membrane"/>
    <property type="evidence" value="ECO:0000316"/>
    <property type="project" value="ARUK-UCL"/>
</dbReference>
<dbReference type="GO" id="GO:0060342">
    <property type="term" value="C:photoreceptor inner segment membrane"/>
    <property type="evidence" value="ECO:0000250"/>
    <property type="project" value="ARUK-UCL"/>
</dbReference>
<dbReference type="GO" id="GO:0005886">
    <property type="term" value="C:plasma membrane"/>
    <property type="evidence" value="ECO:0000314"/>
    <property type="project" value="UniProtKB"/>
</dbReference>
<dbReference type="GO" id="GO:0014069">
    <property type="term" value="C:postsynaptic density"/>
    <property type="evidence" value="ECO:0007669"/>
    <property type="project" value="Ensembl"/>
</dbReference>
<dbReference type="GO" id="GO:0032991">
    <property type="term" value="C:protein-containing complex"/>
    <property type="evidence" value="ECO:0000314"/>
    <property type="project" value="MGI"/>
</dbReference>
<dbReference type="GO" id="GO:0042383">
    <property type="term" value="C:sarcolemma"/>
    <property type="evidence" value="ECO:0000250"/>
    <property type="project" value="BHF-UCL"/>
</dbReference>
<dbReference type="GO" id="GO:0005890">
    <property type="term" value="C:sodium:potassium-exchanging ATPase complex"/>
    <property type="evidence" value="ECO:0000314"/>
    <property type="project" value="BHF-UCL"/>
</dbReference>
<dbReference type="GO" id="GO:0036126">
    <property type="term" value="C:sperm flagellum"/>
    <property type="evidence" value="ECO:0000314"/>
    <property type="project" value="ARUK-UCL"/>
</dbReference>
<dbReference type="GO" id="GO:0030315">
    <property type="term" value="C:T-tubule"/>
    <property type="evidence" value="ECO:0000316"/>
    <property type="project" value="ARUK-UCL"/>
</dbReference>
<dbReference type="GO" id="GO:0005524">
    <property type="term" value="F:ATP binding"/>
    <property type="evidence" value="ECO:0000250"/>
    <property type="project" value="BHF-UCL"/>
</dbReference>
<dbReference type="GO" id="GO:0016887">
    <property type="term" value="F:ATP hydrolysis activity"/>
    <property type="evidence" value="ECO:0000314"/>
    <property type="project" value="UniProt"/>
</dbReference>
<dbReference type="GO" id="GO:0005391">
    <property type="term" value="F:P-type sodium:potassium-exchanging transporter activity"/>
    <property type="evidence" value="ECO:0000314"/>
    <property type="project" value="BHF-UCL"/>
</dbReference>
<dbReference type="GO" id="GO:0016791">
    <property type="term" value="F:phosphatase activity"/>
    <property type="evidence" value="ECO:0007669"/>
    <property type="project" value="Ensembl"/>
</dbReference>
<dbReference type="GO" id="GO:0030955">
    <property type="term" value="F:potassium ion binding"/>
    <property type="evidence" value="ECO:0000250"/>
    <property type="project" value="BHF-UCL"/>
</dbReference>
<dbReference type="GO" id="GO:0046982">
    <property type="term" value="F:protein heterodimerization activity"/>
    <property type="evidence" value="ECO:0000250"/>
    <property type="project" value="ARUK-UCL"/>
</dbReference>
<dbReference type="GO" id="GO:0051087">
    <property type="term" value="F:protein-folding chaperone binding"/>
    <property type="evidence" value="ECO:0000353"/>
    <property type="project" value="BHF-UCL"/>
</dbReference>
<dbReference type="GO" id="GO:0031402">
    <property type="term" value="F:sodium ion binding"/>
    <property type="evidence" value="ECO:0000250"/>
    <property type="project" value="BHF-UCL"/>
</dbReference>
<dbReference type="GO" id="GO:1990239">
    <property type="term" value="F:steroid hormone binding"/>
    <property type="evidence" value="ECO:0000314"/>
    <property type="project" value="BHF-UCL"/>
</dbReference>
<dbReference type="GO" id="GO:0044325">
    <property type="term" value="F:transmembrane transporter binding"/>
    <property type="evidence" value="ECO:0007669"/>
    <property type="project" value="Ensembl"/>
</dbReference>
<dbReference type="GO" id="GO:0086002">
    <property type="term" value="P:cardiac muscle cell action potential involved in contraction"/>
    <property type="evidence" value="ECO:0000304"/>
    <property type="project" value="BHF-UCL"/>
</dbReference>
<dbReference type="GO" id="GO:0086064">
    <property type="term" value="P:cell communication by electrical coupling involved in cardiac conduction"/>
    <property type="evidence" value="ECO:0000304"/>
    <property type="project" value="BHF-UCL"/>
</dbReference>
<dbReference type="GO" id="GO:0071383">
    <property type="term" value="P:cellular response to steroid hormone stimulus"/>
    <property type="evidence" value="ECO:0000314"/>
    <property type="project" value="BHF-UCL"/>
</dbReference>
<dbReference type="GO" id="GO:0010248">
    <property type="term" value="P:establishment or maintenance of transmembrane electrochemical gradient"/>
    <property type="evidence" value="ECO:0000303"/>
    <property type="project" value="ComplexPortal"/>
</dbReference>
<dbReference type="GO" id="GO:0030007">
    <property type="term" value="P:intracellular potassium ion homeostasis"/>
    <property type="evidence" value="ECO:0000314"/>
    <property type="project" value="BHF-UCL"/>
</dbReference>
<dbReference type="GO" id="GO:0006883">
    <property type="term" value="P:intracellular sodium ion homeostasis"/>
    <property type="evidence" value="ECO:0000314"/>
    <property type="project" value="BHF-UCL"/>
</dbReference>
<dbReference type="GO" id="GO:0086009">
    <property type="term" value="P:membrane repolarization"/>
    <property type="evidence" value="ECO:0000314"/>
    <property type="project" value="BHF-UCL"/>
</dbReference>
<dbReference type="GO" id="GO:0086013">
    <property type="term" value="P:membrane repolarization during cardiac muscle cell action potential"/>
    <property type="evidence" value="ECO:0000305"/>
    <property type="project" value="BHF-UCL"/>
</dbReference>
<dbReference type="GO" id="GO:0031947">
    <property type="term" value="P:negative regulation of glucocorticoid biosynthetic process"/>
    <property type="evidence" value="ECO:0007669"/>
    <property type="project" value="Ensembl"/>
</dbReference>
<dbReference type="GO" id="GO:0045822">
    <property type="term" value="P:negative regulation of heart contraction"/>
    <property type="evidence" value="ECO:0007669"/>
    <property type="project" value="Ensembl"/>
</dbReference>
<dbReference type="GO" id="GO:0007231">
    <property type="term" value="P:osmosensory signaling pathway"/>
    <property type="evidence" value="ECO:0007669"/>
    <property type="project" value="Ensembl"/>
</dbReference>
<dbReference type="GO" id="GO:0045823">
    <property type="term" value="P:positive regulation of heart contraction"/>
    <property type="evidence" value="ECO:0007669"/>
    <property type="project" value="Ensembl"/>
</dbReference>
<dbReference type="GO" id="GO:0045989">
    <property type="term" value="P:positive regulation of striated muscle contraction"/>
    <property type="evidence" value="ECO:0007669"/>
    <property type="project" value="Ensembl"/>
</dbReference>
<dbReference type="GO" id="GO:1990573">
    <property type="term" value="P:potassium ion import across plasma membrane"/>
    <property type="evidence" value="ECO:0000314"/>
    <property type="project" value="BHF-UCL"/>
</dbReference>
<dbReference type="GO" id="GO:0071805">
    <property type="term" value="P:potassium ion transmembrane transport"/>
    <property type="evidence" value="ECO:0000316"/>
    <property type="project" value="ARUK-UCL"/>
</dbReference>
<dbReference type="GO" id="GO:1902600">
    <property type="term" value="P:proton transmembrane transport"/>
    <property type="evidence" value="ECO:0000318"/>
    <property type="project" value="GO_Central"/>
</dbReference>
<dbReference type="GO" id="GO:0008217">
    <property type="term" value="P:regulation of blood pressure"/>
    <property type="evidence" value="ECO:0007669"/>
    <property type="project" value="Ensembl"/>
</dbReference>
<dbReference type="GO" id="GO:0002028">
    <property type="term" value="P:regulation of sodium ion transport"/>
    <property type="evidence" value="ECO:0000250"/>
    <property type="project" value="UniProtKB"/>
</dbReference>
<dbReference type="GO" id="GO:0002026">
    <property type="term" value="P:regulation of the force of heart contraction"/>
    <property type="evidence" value="ECO:0007669"/>
    <property type="project" value="Ensembl"/>
</dbReference>
<dbReference type="GO" id="GO:0055119">
    <property type="term" value="P:relaxation of cardiac muscle"/>
    <property type="evidence" value="ECO:0000304"/>
    <property type="project" value="BHF-UCL"/>
</dbReference>
<dbReference type="GO" id="GO:1903416">
    <property type="term" value="P:response to glycoside"/>
    <property type="evidence" value="ECO:0000314"/>
    <property type="project" value="BHF-UCL"/>
</dbReference>
<dbReference type="GO" id="GO:0009410">
    <property type="term" value="P:response to xenobiotic stimulus"/>
    <property type="evidence" value="ECO:0007669"/>
    <property type="project" value="Ensembl"/>
</dbReference>
<dbReference type="GO" id="GO:0036376">
    <property type="term" value="P:sodium ion export across plasma membrane"/>
    <property type="evidence" value="ECO:0000314"/>
    <property type="project" value="BHF-UCL"/>
</dbReference>
<dbReference type="GO" id="GO:0035725">
    <property type="term" value="P:sodium ion transmembrane transport"/>
    <property type="evidence" value="ECO:0000316"/>
    <property type="project" value="ARUK-UCL"/>
</dbReference>
<dbReference type="CDD" id="cd02608">
    <property type="entry name" value="P-type_ATPase_Na-K_like"/>
    <property type="match status" value="1"/>
</dbReference>
<dbReference type="FunFam" id="1.20.1110.10:FF:000163">
    <property type="match status" value="1"/>
</dbReference>
<dbReference type="FunFam" id="2.70.150.10:FF:000106">
    <property type="entry name" value="Sodium/potassium-transporting ATPase subunit alpha"/>
    <property type="match status" value="1"/>
</dbReference>
<dbReference type="FunFam" id="3.40.1110.10:FF:000001">
    <property type="entry name" value="Sodium/potassium-transporting ATPase subunit alpha"/>
    <property type="match status" value="1"/>
</dbReference>
<dbReference type="FunFam" id="3.40.50.1000:FF:000004">
    <property type="entry name" value="Sodium/potassium-transporting ATPase subunit alpha"/>
    <property type="match status" value="1"/>
</dbReference>
<dbReference type="FunFam" id="1.20.1110.10:FF:000095">
    <property type="entry name" value="Sodium/potassium-transporting ATPase subunit alpha-1"/>
    <property type="match status" value="2"/>
</dbReference>
<dbReference type="Gene3D" id="3.40.1110.10">
    <property type="entry name" value="Calcium-transporting ATPase, cytoplasmic domain N"/>
    <property type="match status" value="1"/>
</dbReference>
<dbReference type="Gene3D" id="2.70.150.10">
    <property type="entry name" value="Calcium-transporting ATPase, cytoplasmic transduction domain A"/>
    <property type="match status" value="1"/>
</dbReference>
<dbReference type="Gene3D" id="1.20.1110.10">
    <property type="entry name" value="Calcium-transporting ATPase, transmembrane domain"/>
    <property type="match status" value="1"/>
</dbReference>
<dbReference type="Gene3D" id="3.40.50.1000">
    <property type="entry name" value="HAD superfamily/HAD-like"/>
    <property type="match status" value="1"/>
</dbReference>
<dbReference type="InterPro" id="IPR006068">
    <property type="entry name" value="ATPase_P-typ_cation-transptr_C"/>
</dbReference>
<dbReference type="InterPro" id="IPR004014">
    <property type="entry name" value="ATPase_P-typ_cation-transptr_N"/>
</dbReference>
<dbReference type="InterPro" id="IPR023299">
    <property type="entry name" value="ATPase_P-typ_cyto_dom_N"/>
</dbReference>
<dbReference type="InterPro" id="IPR018303">
    <property type="entry name" value="ATPase_P-typ_P_site"/>
</dbReference>
<dbReference type="InterPro" id="IPR023298">
    <property type="entry name" value="ATPase_P-typ_TM_dom_sf"/>
</dbReference>
<dbReference type="InterPro" id="IPR008250">
    <property type="entry name" value="ATPase_P-typ_transduc_dom_A_sf"/>
</dbReference>
<dbReference type="InterPro" id="IPR050510">
    <property type="entry name" value="Cation_transp_ATPase_P-type"/>
</dbReference>
<dbReference type="InterPro" id="IPR036412">
    <property type="entry name" value="HAD-like_sf"/>
</dbReference>
<dbReference type="InterPro" id="IPR023214">
    <property type="entry name" value="HAD_sf"/>
</dbReference>
<dbReference type="InterPro" id="IPR005775">
    <property type="entry name" value="P-type_ATPase_IIC"/>
</dbReference>
<dbReference type="InterPro" id="IPR001757">
    <property type="entry name" value="P_typ_ATPase"/>
</dbReference>
<dbReference type="InterPro" id="IPR044492">
    <property type="entry name" value="P_typ_ATPase_HD_dom"/>
</dbReference>
<dbReference type="NCBIfam" id="TIGR01106">
    <property type="entry name" value="ATPase-IIC_X-K"/>
    <property type="match status" value="1"/>
</dbReference>
<dbReference type="NCBIfam" id="TIGR01494">
    <property type="entry name" value="ATPase_P-type"/>
    <property type="match status" value="2"/>
</dbReference>
<dbReference type="PANTHER" id="PTHR43294">
    <property type="entry name" value="SODIUM/POTASSIUM-TRANSPORTING ATPASE SUBUNIT ALPHA"/>
    <property type="match status" value="1"/>
</dbReference>
<dbReference type="PANTHER" id="PTHR43294:SF9">
    <property type="entry name" value="SODIUM_POTASSIUM-TRANSPORTING ATPASE SUBUNIT ALPHA-1"/>
    <property type="match status" value="1"/>
</dbReference>
<dbReference type="Pfam" id="PF13246">
    <property type="entry name" value="Cation_ATPase"/>
    <property type="match status" value="1"/>
</dbReference>
<dbReference type="Pfam" id="PF00689">
    <property type="entry name" value="Cation_ATPase_C"/>
    <property type="match status" value="1"/>
</dbReference>
<dbReference type="Pfam" id="PF00690">
    <property type="entry name" value="Cation_ATPase_N"/>
    <property type="match status" value="1"/>
</dbReference>
<dbReference type="Pfam" id="PF00122">
    <property type="entry name" value="E1-E2_ATPase"/>
    <property type="match status" value="1"/>
</dbReference>
<dbReference type="PRINTS" id="PR00119">
    <property type="entry name" value="CATATPASE"/>
</dbReference>
<dbReference type="PRINTS" id="PR00121">
    <property type="entry name" value="NAKATPASE"/>
</dbReference>
<dbReference type="SFLD" id="SFLDS00003">
    <property type="entry name" value="Haloacid_Dehalogenase"/>
    <property type="match status" value="1"/>
</dbReference>
<dbReference type="SFLD" id="SFLDF00027">
    <property type="entry name" value="p-type_atpase"/>
    <property type="match status" value="1"/>
</dbReference>
<dbReference type="SMART" id="SM00831">
    <property type="entry name" value="Cation_ATPase_N"/>
    <property type="match status" value="1"/>
</dbReference>
<dbReference type="SUPFAM" id="SSF81653">
    <property type="entry name" value="Calcium ATPase, transduction domain A"/>
    <property type="match status" value="1"/>
</dbReference>
<dbReference type="SUPFAM" id="SSF81665">
    <property type="entry name" value="Calcium ATPase, transmembrane domain M"/>
    <property type="match status" value="1"/>
</dbReference>
<dbReference type="SUPFAM" id="SSF56784">
    <property type="entry name" value="HAD-like"/>
    <property type="match status" value="1"/>
</dbReference>
<dbReference type="SUPFAM" id="SSF81660">
    <property type="entry name" value="Metal cation-transporting ATPase, ATP-binding domain N"/>
    <property type="match status" value="1"/>
</dbReference>
<dbReference type="PROSITE" id="PS00154">
    <property type="entry name" value="ATPASE_E1_E2"/>
    <property type="match status" value="1"/>
</dbReference>
<keyword id="KW-0002">3D-structure</keyword>
<keyword id="KW-0007">Acetylation</keyword>
<keyword id="KW-0025">Alternative splicing</keyword>
<keyword id="KW-0067">ATP-binding</keyword>
<keyword id="KW-1003">Cell membrane</keyword>
<keyword id="KW-0966">Cell projection</keyword>
<keyword id="KW-0144">Charcot-Marie-Tooth disease</keyword>
<keyword id="KW-0903">Direct protein sequencing</keyword>
<keyword id="KW-0887">Epilepsy</keyword>
<keyword id="KW-0991">Intellectual disability</keyword>
<keyword id="KW-0406">Ion transport</keyword>
<keyword id="KW-0460">Magnesium</keyword>
<keyword id="KW-0472">Membrane</keyword>
<keyword id="KW-0479">Metal-binding</keyword>
<keyword id="KW-0523">Neurodegeneration</keyword>
<keyword id="KW-0622">Neuropathy</keyword>
<keyword id="KW-0547">Nucleotide-binding</keyword>
<keyword id="KW-0597">Phosphoprotein</keyword>
<keyword id="KW-0630">Potassium</keyword>
<keyword id="KW-0633">Potassium transport</keyword>
<keyword id="KW-0982">Primary hypomagnesemia</keyword>
<keyword id="KW-1267">Proteomics identification</keyword>
<keyword id="KW-1185">Reference proteome</keyword>
<keyword id="KW-0915">Sodium</keyword>
<keyword id="KW-0739">Sodium transport</keyword>
<keyword id="KW-0740">Sodium/potassium transport</keyword>
<keyword id="KW-1278">Translocase</keyword>
<keyword id="KW-0812">Transmembrane</keyword>
<keyword id="KW-1133">Transmembrane helix</keyword>
<keyword id="KW-0813">Transport</keyword>
<accession>P05023</accession>
<accession>B2RBR6</accession>
<accession>B7Z2T5</accession>
<accession>B7Z3U6</accession>
<accession>F5H3A1</accession>
<accession>Q16689</accession>
<accession>Q6LDM4</accession>
<accession>Q9UCN1</accession>
<accession>Q9UJ20</accession>
<accession>Q9UJ21</accession>
<reference key="1">
    <citation type="journal article" date="1986" name="J. Biochem.">
        <title>Primary structure of the alpha-subunit of human Na,K-ATPase deduced from cDNA sequence.</title>
        <authorList>
            <person name="Kawakami K."/>
            <person name="Ohta T."/>
            <person name="Nojima H."/>
            <person name="Nagano K."/>
        </authorList>
    </citation>
    <scope>NUCLEOTIDE SEQUENCE [MRNA] (ISOFORM 1)</scope>
</reference>
<reference key="2">
    <citation type="journal article" date="1995" name="Gene">
        <title>Characterization and quantification of full-length and truncated Na,K-ATPase alpha 1 and beta 1 RNA transcripts expressed in human retinal pigment epithelium.</title>
        <authorList>
            <person name="Ruiz A."/>
            <person name="Bhat S.P."/>
            <person name="Bok D."/>
        </authorList>
    </citation>
    <scope>NUCLEOTIDE SEQUENCE [MRNA] (ISOFORM 2)</scope>
    <source>
        <tissue>Retinal pigment epithelium</tissue>
    </source>
</reference>
<reference key="3">
    <citation type="journal article" date="2004" name="Nat. Genet.">
        <title>Complete sequencing and characterization of 21,243 full-length human cDNAs.</title>
        <authorList>
            <person name="Ota T."/>
            <person name="Suzuki Y."/>
            <person name="Nishikawa T."/>
            <person name="Otsuki T."/>
            <person name="Sugiyama T."/>
            <person name="Irie R."/>
            <person name="Wakamatsu A."/>
            <person name="Hayashi K."/>
            <person name="Sato H."/>
            <person name="Nagai K."/>
            <person name="Kimura K."/>
            <person name="Makita H."/>
            <person name="Sekine M."/>
            <person name="Obayashi M."/>
            <person name="Nishi T."/>
            <person name="Shibahara T."/>
            <person name="Tanaka T."/>
            <person name="Ishii S."/>
            <person name="Yamamoto J."/>
            <person name="Saito K."/>
            <person name="Kawai Y."/>
            <person name="Isono Y."/>
            <person name="Nakamura Y."/>
            <person name="Nagahari K."/>
            <person name="Murakami K."/>
            <person name="Yasuda T."/>
            <person name="Iwayanagi T."/>
            <person name="Wagatsuma M."/>
            <person name="Shiratori A."/>
            <person name="Sudo H."/>
            <person name="Hosoiri T."/>
            <person name="Kaku Y."/>
            <person name="Kodaira H."/>
            <person name="Kondo H."/>
            <person name="Sugawara M."/>
            <person name="Takahashi M."/>
            <person name="Kanda K."/>
            <person name="Yokoi T."/>
            <person name="Furuya T."/>
            <person name="Kikkawa E."/>
            <person name="Omura Y."/>
            <person name="Abe K."/>
            <person name="Kamihara K."/>
            <person name="Katsuta N."/>
            <person name="Sato K."/>
            <person name="Tanikawa M."/>
            <person name="Yamazaki M."/>
            <person name="Ninomiya K."/>
            <person name="Ishibashi T."/>
            <person name="Yamashita H."/>
            <person name="Murakawa K."/>
            <person name="Fujimori K."/>
            <person name="Tanai H."/>
            <person name="Kimata M."/>
            <person name="Watanabe M."/>
            <person name="Hiraoka S."/>
            <person name="Chiba Y."/>
            <person name="Ishida S."/>
            <person name="Ono Y."/>
            <person name="Takiguchi S."/>
            <person name="Watanabe S."/>
            <person name="Yosida M."/>
            <person name="Hotuta T."/>
            <person name="Kusano J."/>
            <person name="Kanehori K."/>
            <person name="Takahashi-Fujii A."/>
            <person name="Hara H."/>
            <person name="Tanase T.-O."/>
            <person name="Nomura Y."/>
            <person name="Togiya S."/>
            <person name="Komai F."/>
            <person name="Hara R."/>
            <person name="Takeuchi K."/>
            <person name="Arita M."/>
            <person name="Imose N."/>
            <person name="Musashino K."/>
            <person name="Yuuki H."/>
            <person name="Oshima A."/>
            <person name="Sasaki N."/>
            <person name="Aotsuka S."/>
            <person name="Yoshikawa Y."/>
            <person name="Matsunawa H."/>
            <person name="Ichihara T."/>
            <person name="Shiohata N."/>
            <person name="Sano S."/>
            <person name="Moriya S."/>
            <person name="Momiyama H."/>
            <person name="Satoh N."/>
            <person name="Takami S."/>
            <person name="Terashima Y."/>
            <person name="Suzuki O."/>
            <person name="Nakagawa S."/>
            <person name="Senoh A."/>
            <person name="Mizoguchi H."/>
            <person name="Goto Y."/>
            <person name="Shimizu F."/>
            <person name="Wakebe H."/>
            <person name="Hishigaki H."/>
            <person name="Watanabe T."/>
            <person name="Sugiyama A."/>
            <person name="Takemoto M."/>
            <person name="Kawakami B."/>
            <person name="Yamazaki M."/>
            <person name="Watanabe K."/>
            <person name="Kumagai A."/>
            <person name="Itakura S."/>
            <person name="Fukuzumi Y."/>
            <person name="Fujimori Y."/>
            <person name="Komiyama M."/>
            <person name="Tashiro H."/>
            <person name="Tanigami A."/>
            <person name="Fujiwara T."/>
            <person name="Ono T."/>
            <person name="Yamada K."/>
            <person name="Fujii Y."/>
            <person name="Ozaki K."/>
            <person name="Hirao M."/>
            <person name="Ohmori Y."/>
            <person name="Kawabata A."/>
            <person name="Hikiji T."/>
            <person name="Kobatake N."/>
            <person name="Inagaki H."/>
            <person name="Ikema Y."/>
            <person name="Okamoto S."/>
            <person name="Okitani R."/>
            <person name="Kawakami T."/>
            <person name="Noguchi S."/>
            <person name="Itoh T."/>
            <person name="Shigeta K."/>
            <person name="Senba T."/>
            <person name="Matsumura K."/>
            <person name="Nakajima Y."/>
            <person name="Mizuno T."/>
            <person name="Morinaga M."/>
            <person name="Sasaki M."/>
            <person name="Togashi T."/>
            <person name="Oyama M."/>
            <person name="Hata H."/>
            <person name="Watanabe M."/>
            <person name="Komatsu T."/>
            <person name="Mizushima-Sugano J."/>
            <person name="Satoh T."/>
            <person name="Shirai Y."/>
            <person name="Takahashi Y."/>
            <person name="Nakagawa K."/>
            <person name="Okumura K."/>
            <person name="Nagase T."/>
            <person name="Nomura N."/>
            <person name="Kikuchi H."/>
            <person name="Masuho Y."/>
            <person name="Yamashita R."/>
            <person name="Nakai K."/>
            <person name="Yada T."/>
            <person name="Nakamura Y."/>
            <person name="Ohara O."/>
            <person name="Isogai T."/>
            <person name="Sugano S."/>
        </authorList>
    </citation>
    <scope>NUCLEOTIDE SEQUENCE [LARGE SCALE MRNA] (ISOFORMS 1; 3 AND 4)</scope>
    <source>
        <tissue>Cerebellum</tissue>
    </source>
</reference>
<reference key="4">
    <citation type="journal article" date="2006" name="Nature">
        <title>The DNA sequence and biological annotation of human chromosome 1.</title>
        <authorList>
            <person name="Gregory S.G."/>
            <person name="Barlow K.F."/>
            <person name="McLay K.E."/>
            <person name="Kaul R."/>
            <person name="Swarbreck D."/>
            <person name="Dunham A."/>
            <person name="Scott C.E."/>
            <person name="Howe K.L."/>
            <person name="Woodfine K."/>
            <person name="Spencer C.C.A."/>
            <person name="Jones M.C."/>
            <person name="Gillson C."/>
            <person name="Searle S."/>
            <person name="Zhou Y."/>
            <person name="Kokocinski F."/>
            <person name="McDonald L."/>
            <person name="Evans R."/>
            <person name="Phillips K."/>
            <person name="Atkinson A."/>
            <person name="Cooper R."/>
            <person name="Jones C."/>
            <person name="Hall R.E."/>
            <person name="Andrews T.D."/>
            <person name="Lloyd C."/>
            <person name="Ainscough R."/>
            <person name="Almeida J.P."/>
            <person name="Ambrose K.D."/>
            <person name="Anderson F."/>
            <person name="Andrew R.W."/>
            <person name="Ashwell R.I.S."/>
            <person name="Aubin K."/>
            <person name="Babbage A.K."/>
            <person name="Bagguley C.L."/>
            <person name="Bailey J."/>
            <person name="Beasley H."/>
            <person name="Bethel G."/>
            <person name="Bird C.P."/>
            <person name="Bray-Allen S."/>
            <person name="Brown J.Y."/>
            <person name="Brown A.J."/>
            <person name="Buckley D."/>
            <person name="Burton J."/>
            <person name="Bye J."/>
            <person name="Carder C."/>
            <person name="Chapman J.C."/>
            <person name="Clark S.Y."/>
            <person name="Clarke G."/>
            <person name="Clee C."/>
            <person name="Cobley V."/>
            <person name="Collier R.E."/>
            <person name="Corby N."/>
            <person name="Coville G.J."/>
            <person name="Davies J."/>
            <person name="Deadman R."/>
            <person name="Dunn M."/>
            <person name="Earthrowl M."/>
            <person name="Ellington A.G."/>
            <person name="Errington H."/>
            <person name="Frankish A."/>
            <person name="Frankland J."/>
            <person name="French L."/>
            <person name="Garner P."/>
            <person name="Garnett J."/>
            <person name="Gay L."/>
            <person name="Ghori M.R.J."/>
            <person name="Gibson R."/>
            <person name="Gilby L.M."/>
            <person name="Gillett W."/>
            <person name="Glithero R.J."/>
            <person name="Grafham D.V."/>
            <person name="Griffiths C."/>
            <person name="Griffiths-Jones S."/>
            <person name="Grocock R."/>
            <person name="Hammond S."/>
            <person name="Harrison E.S.I."/>
            <person name="Hart E."/>
            <person name="Haugen E."/>
            <person name="Heath P.D."/>
            <person name="Holmes S."/>
            <person name="Holt K."/>
            <person name="Howden P.J."/>
            <person name="Hunt A.R."/>
            <person name="Hunt S.E."/>
            <person name="Hunter G."/>
            <person name="Isherwood J."/>
            <person name="James R."/>
            <person name="Johnson C."/>
            <person name="Johnson D."/>
            <person name="Joy A."/>
            <person name="Kay M."/>
            <person name="Kershaw J.K."/>
            <person name="Kibukawa M."/>
            <person name="Kimberley A.M."/>
            <person name="King A."/>
            <person name="Knights A.J."/>
            <person name="Lad H."/>
            <person name="Laird G."/>
            <person name="Lawlor S."/>
            <person name="Leongamornlert D.A."/>
            <person name="Lloyd D.M."/>
            <person name="Loveland J."/>
            <person name="Lovell J."/>
            <person name="Lush M.J."/>
            <person name="Lyne R."/>
            <person name="Martin S."/>
            <person name="Mashreghi-Mohammadi M."/>
            <person name="Matthews L."/>
            <person name="Matthews N.S.W."/>
            <person name="McLaren S."/>
            <person name="Milne S."/>
            <person name="Mistry S."/>
            <person name="Moore M.J.F."/>
            <person name="Nickerson T."/>
            <person name="O'Dell C.N."/>
            <person name="Oliver K."/>
            <person name="Palmeiri A."/>
            <person name="Palmer S.A."/>
            <person name="Parker A."/>
            <person name="Patel D."/>
            <person name="Pearce A.V."/>
            <person name="Peck A.I."/>
            <person name="Pelan S."/>
            <person name="Phelps K."/>
            <person name="Phillimore B.J."/>
            <person name="Plumb R."/>
            <person name="Rajan J."/>
            <person name="Raymond C."/>
            <person name="Rouse G."/>
            <person name="Saenphimmachak C."/>
            <person name="Sehra H.K."/>
            <person name="Sheridan E."/>
            <person name="Shownkeen R."/>
            <person name="Sims S."/>
            <person name="Skuce C.D."/>
            <person name="Smith M."/>
            <person name="Steward C."/>
            <person name="Subramanian S."/>
            <person name="Sycamore N."/>
            <person name="Tracey A."/>
            <person name="Tromans A."/>
            <person name="Van Helmond Z."/>
            <person name="Wall M."/>
            <person name="Wallis J.M."/>
            <person name="White S."/>
            <person name="Whitehead S.L."/>
            <person name="Wilkinson J.E."/>
            <person name="Willey D.L."/>
            <person name="Williams H."/>
            <person name="Wilming L."/>
            <person name="Wray P.W."/>
            <person name="Wu Z."/>
            <person name="Coulson A."/>
            <person name="Vaudin M."/>
            <person name="Sulston J.E."/>
            <person name="Durbin R.M."/>
            <person name="Hubbard T."/>
            <person name="Wooster R."/>
            <person name="Dunham I."/>
            <person name="Carter N.P."/>
            <person name="McVean G."/>
            <person name="Ross M.T."/>
            <person name="Harrow J."/>
            <person name="Olson M.V."/>
            <person name="Beck S."/>
            <person name="Rogers J."/>
            <person name="Bentley D.R."/>
        </authorList>
    </citation>
    <scope>NUCLEOTIDE SEQUENCE [LARGE SCALE GENOMIC DNA]</scope>
</reference>
<reference key="5">
    <citation type="submission" date="2005-07" db="EMBL/GenBank/DDBJ databases">
        <authorList>
            <person name="Mural R.J."/>
            <person name="Istrail S."/>
            <person name="Sutton G."/>
            <person name="Florea L."/>
            <person name="Halpern A.L."/>
            <person name="Mobarry C.M."/>
            <person name="Lippert R."/>
            <person name="Walenz B."/>
            <person name="Shatkay H."/>
            <person name="Dew I."/>
            <person name="Miller J.R."/>
            <person name="Flanigan M.J."/>
            <person name="Edwards N.J."/>
            <person name="Bolanos R."/>
            <person name="Fasulo D."/>
            <person name="Halldorsson B.V."/>
            <person name="Hannenhalli S."/>
            <person name="Turner R."/>
            <person name="Yooseph S."/>
            <person name="Lu F."/>
            <person name="Nusskern D.R."/>
            <person name="Shue B.C."/>
            <person name="Zheng X.H."/>
            <person name="Zhong F."/>
            <person name="Delcher A.L."/>
            <person name="Huson D.H."/>
            <person name="Kravitz S.A."/>
            <person name="Mouchard L."/>
            <person name="Reinert K."/>
            <person name="Remington K.A."/>
            <person name="Clark A.G."/>
            <person name="Waterman M.S."/>
            <person name="Eichler E.E."/>
            <person name="Adams M.D."/>
            <person name="Hunkapiller M.W."/>
            <person name="Myers E.W."/>
            <person name="Venter J.C."/>
        </authorList>
    </citation>
    <scope>NUCLEOTIDE SEQUENCE [LARGE SCALE GENOMIC DNA]</scope>
</reference>
<reference key="6">
    <citation type="journal article" date="2004" name="Genome Res.">
        <title>The status, quality, and expansion of the NIH full-length cDNA project: the Mammalian Gene Collection (MGC).</title>
        <authorList>
            <consortium name="The MGC Project Team"/>
        </authorList>
    </citation>
    <scope>NUCLEOTIDE SEQUENCE [LARGE SCALE MRNA] (ISOFORM 1)</scope>
    <source>
        <tissue>Brain</tissue>
        <tissue>Cervix</tissue>
        <tissue>Skin</tissue>
    </source>
</reference>
<reference key="7">
    <citation type="journal article" date="1990" name="Genomics">
        <title>The human Na, K-ATPase alpha 1 gene: characterization of the 5'-flanking region and identification of a restriction fragment length polymorphism.</title>
        <authorList>
            <person name="Shull M.M."/>
            <person name="Pugh D.G."/>
            <person name="Lingrel J.B."/>
        </authorList>
    </citation>
    <scope>NUCLEOTIDE SEQUENCE [GENOMIC DNA] OF 1-61</scope>
</reference>
<reference key="8">
    <citation type="submission" date="1996-03" db="EMBL/GenBank/DDBJ databases">
        <authorList>
            <person name="Zhang J.-S."/>
            <person name="Yang J.X."/>
            <person name="Fang M.W."/>
            <person name="Lu S.D."/>
        </authorList>
    </citation>
    <scope>NUCLEOTIDE SEQUENCE [GENOMIC DNA] OF 85-148</scope>
    <source>
        <tissue>Placenta</tissue>
    </source>
</reference>
<reference key="9">
    <citation type="journal article" date="1987" name="Proc. Natl. Acad. Sci. U.S.A.">
        <title>Multiple genes encode the human Na+,K+-ATPase catalytic subunit.</title>
        <authorList>
            <person name="Shull M.M."/>
            <person name="Lingrel J.B."/>
        </authorList>
    </citation>
    <scope>NUCLEOTIDE SEQUENCE [MRNA] OF 168-189 AND 213-244</scope>
</reference>
<reference key="10">
    <citation type="journal article" date="1987" name="Proc. Natl. Acad. Sci. U.S.A.">
        <title>Human placental Na+,K+-ATPase alpha subunit: cDNA cloning, tissue expression, DNA polymorphism, and chromosomal localization.</title>
        <authorList>
            <person name="Chehab F.F."/>
            <person name="Kan Y.W."/>
            <person name="Law M.L."/>
            <person name="Hartz J."/>
            <person name="Kao F.T."/>
            <person name="Blostein R."/>
        </authorList>
    </citation>
    <scope>NUCLEOTIDE SEQUENCE [MRNA] OF 198-943 (ISOFORM 1)</scope>
    <source>
        <tissue>Placenta</tissue>
    </source>
</reference>
<reference key="11">
    <citation type="journal article" date="1992" name="Nature">
        <title>Predominant naturally processed peptides bound to HLA-DR1 are derived from MHC-related molecules and are heterogeneous in size.</title>
        <authorList>
            <person name="Chicz R.M."/>
            <person name="Urban R.G."/>
            <person name="Lane W.S."/>
            <person name="Gorga J.C."/>
            <person name="Stern L.J."/>
            <person name="Vignali D.A.A."/>
            <person name="Strominger J.L."/>
        </authorList>
    </citation>
    <scope>PROTEIN SEQUENCE OF 199-216</scope>
    <scope>INTERACTION WITH HLA-DR1</scope>
</reference>
<reference key="12">
    <citation type="journal article" date="1987" name="FEBS Lett.">
        <title>The family of human Na+,K+-ATPase genes. No less than five genes and/or pseudogenes related to the alpha-subunit.</title>
        <authorList>
            <person name="Sverdlov E.D."/>
            <person name="Monastyrskaya G.S."/>
            <person name="Broude N.E."/>
            <person name="Ushkaryov Y.A."/>
            <person name="Allikmets R.L."/>
            <person name="Melkov A.M."/>
            <person name="Smirnov Y.V."/>
            <person name="Malyshev I.V."/>
            <person name="Dulubova I.E."/>
            <person name="Petrukhin K.E."/>
            <person name="Gryshin A.V."/>
            <person name="Kiyatkin N.I."/>
            <person name="Kostina M.B."/>
            <person name="Sverdlov V.E."/>
            <person name="Modyanov N.N."/>
            <person name="Ovchinnikov Y.A."/>
        </authorList>
    </citation>
    <scope>NUCLEOTIDE SEQUENCE [GENOMIC DNA] OF 253-341 AND 420-444</scope>
</reference>
<reference key="13">
    <citation type="journal article" date="1986" name="Dokl. Biochem.">
        <title>Amino acid sequence of the 17-kilodalton fragment of the cytoplasmic region of the alpha-subunit of NA+,K+-ATPase.</title>
        <authorList>
            <person name="Ovchinnikov Y.A."/>
            <person name="Monastyrskaya G.S."/>
            <person name="Arsenyan S.G."/>
            <person name="Broude N.E."/>
            <person name="Petrukhin K.E."/>
            <person name="Grishin A.V."/>
            <person name="Arzamazova N.M."/>
            <person name="Severtsova I.V."/>
            <person name="Modyanov N.N."/>
        </authorList>
    </citation>
    <scope>NUCLEOTIDE SEQUENCE [MRNA] OF 471-619</scope>
</reference>
<reference key="14">
    <citation type="journal article" date="1994" name="Mol. Membr. Biol.">
        <title>Subcellular distribution and immunocytochemical localization of Na,K-ATPase subunit isoforms in human skeletal muscle.</title>
        <authorList>
            <person name="Hundal H.S."/>
            <person name="Maxwell D.L."/>
            <person name="Ahmed A."/>
            <person name="Darakhshan F."/>
            <person name="Mitsumoto Y."/>
            <person name="Klip A."/>
        </authorList>
    </citation>
    <scope>SUBCELLULAR LOCATION</scope>
</reference>
<reference key="15">
    <citation type="journal article" date="2004" name="Genome Biol.">
        <title>An unappreciated role for RNA surveillance.</title>
        <authorList>
            <person name="Hillman R.T."/>
            <person name="Green R.E."/>
            <person name="Brenner S.E."/>
        </authorList>
    </citation>
    <scope>SPLICE ISOFORM(S) THAT ARE POTENTIAL NMD TARGET(S)</scope>
</reference>
<reference key="16">
    <citation type="journal article" date="2006" name="J. Proteome Res.">
        <title>Proteomic and bioinformatic characterization of the biogenesis and function of melanosomes.</title>
        <authorList>
            <person name="Chi A."/>
            <person name="Valencia J.C."/>
            <person name="Hu Z.-Z."/>
            <person name="Watabe H."/>
            <person name="Yamaguchi H."/>
            <person name="Mangini N.J."/>
            <person name="Huang H."/>
            <person name="Canfield V.A."/>
            <person name="Cheng K.C."/>
            <person name="Yang F."/>
            <person name="Abe R."/>
            <person name="Yamagishi S."/>
            <person name="Shabanowitz J."/>
            <person name="Hearing V.J."/>
            <person name="Wu C."/>
            <person name="Appella E."/>
            <person name="Hunt D.F."/>
        </authorList>
    </citation>
    <scope>SUBCELLULAR LOCATION [LARGE SCALE ANALYSIS]</scope>
    <source>
        <tissue>Melanoma</tissue>
    </source>
</reference>
<reference key="17">
    <citation type="journal article" date="2008" name="Exp. Cell Res.">
        <title>Novel interactions of CLN3 protein link Batten disease to dysregulation of fodrin-Na+, K+ ATPase complex.</title>
        <authorList>
            <person name="Uusi-Rauva K."/>
            <person name="Luiro K."/>
            <person name="Tanhuanpaeae K."/>
            <person name="Kopra O."/>
            <person name="Martin-Vasallo P."/>
            <person name="Kyttaelae A."/>
            <person name="Jalanko A."/>
        </authorList>
    </citation>
    <scope>INTERACTION WITH CLN3</scope>
</reference>
<reference key="18">
    <citation type="journal article" date="2009" name="Anal. Chem.">
        <title>Lys-N and trypsin cover complementary parts of the phosphoproteome in a refined SCX-based approach.</title>
        <authorList>
            <person name="Gauci S."/>
            <person name="Helbig A.O."/>
            <person name="Slijper M."/>
            <person name="Krijgsveld J."/>
            <person name="Heck A.J."/>
            <person name="Mohammed S."/>
        </authorList>
    </citation>
    <scope>IDENTIFICATION BY MASS SPECTROMETRY [LARGE SCALE ANALYSIS]</scope>
</reference>
<reference key="19">
    <citation type="journal article" date="2009" name="Sci. Signal.">
        <title>Quantitative phosphoproteomic analysis of T cell receptor signaling reveals system-wide modulation of protein-protein interactions.</title>
        <authorList>
            <person name="Mayya V."/>
            <person name="Lundgren D.H."/>
            <person name="Hwang S.-I."/>
            <person name="Rezaul K."/>
            <person name="Wu L."/>
            <person name="Eng J.K."/>
            <person name="Rodionov V."/>
            <person name="Han D.K."/>
        </authorList>
    </citation>
    <scope>PHOSPHORYLATION [LARGE SCALE ANALYSIS] AT TYR-542</scope>
    <scope>IDENTIFICATION BY MASS SPECTROMETRY [LARGE SCALE ANALYSIS]</scope>
    <source>
        <tissue>Leukemic T-cell</tissue>
    </source>
</reference>
<reference key="20">
    <citation type="journal article" date="2011" name="BMC Syst. Biol.">
        <title>Initial characterization of the human central proteome.</title>
        <authorList>
            <person name="Burkard T.R."/>
            <person name="Planyavsky M."/>
            <person name="Kaupe I."/>
            <person name="Breitwieser F.P."/>
            <person name="Buerckstuemmer T."/>
            <person name="Bennett K.L."/>
            <person name="Superti-Furga G."/>
            <person name="Colinge J."/>
        </authorList>
    </citation>
    <scope>IDENTIFICATION BY MASS SPECTROMETRY [LARGE SCALE ANALYSIS]</scope>
</reference>
<reference key="21">
    <citation type="journal article" date="2011" name="J. Biol. Chem.">
        <title>FXYD proteins reverse inhibition of the Na+-K+ pump mediated by glutathionylation of its beta1 subunit.</title>
        <authorList>
            <person name="Bibert S."/>
            <person name="Liu C.C."/>
            <person name="Figtree G.A."/>
            <person name="Garcia A."/>
            <person name="Hamilton E.J."/>
            <person name="Marassi F.M."/>
            <person name="Sweadner K.J."/>
            <person name="Cornelius F."/>
            <person name="Geering K."/>
            <person name="Rasmussen H.H."/>
        </authorList>
    </citation>
    <scope>INTERACTION WITH FXYD3</scope>
</reference>
<reference key="22">
    <citation type="journal article" date="2011" name="Proc. Natl. Acad. Sci. U.S.A.">
        <title>POST, partner of stromal interaction molecule 1 (STIM1), targets STIM1 to multiple transporters.</title>
        <authorList>
            <person name="Krapivinsky G."/>
            <person name="Krapivinsky L."/>
            <person name="Stotz S.C."/>
            <person name="Manasian Y."/>
            <person name="Clapham D.E."/>
        </authorList>
    </citation>
    <scope>INTERACTION WITH SLC35G1 AND STIM1</scope>
</reference>
<reference key="23">
    <citation type="journal article" date="2013" name="J. Proteome Res.">
        <title>Toward a comprehensive characterization of a human cancer cell phosphoproteome.</title>
        <authorList>
            <person name="Zhou H."/>
            <person name="Di Palma S."/>
            <person name="Preisinger C."/>
            <person name="Peng M."/>
            <person name="Polat A.N."/>
            <person name="Heck A.J."/>
            <person name="Mohammed S."/>
        </authorList>
    </citation>
    <scope>PHOSPHORYLATION [LARGE SCALE ANALYSIS] AT SER-16</scope>
    <scope>IDENTIFICATION BY MASS SPECTROMETRY [LARGE SCALE ANALYSIS]</scope>
    <source>
        <tissue>Cervix carcinoma</tissue>
        <tissue>Erythroleukemia</tissue>
    </source>
</reference>
<reference key="24">
    <citation type="journal article" date="2014" name="J. Proteomics">
        <title>An enzyme assisted RP-RPLC approach for in-depth analysis of human liver phosphoproteome.</title>
        <authorList>
            <person name="Bian Y."/>
            <person name="Song C."/>
            <person name="Cheng K."/>
            <person name="Dong M."/>
            <person name="Wang F."/>
            <person name="Huang J."/>
            <person name="Sun D."/>
            <person name="Wang L."/>
            <person name="Ye M."/>
            <person name="Zou H."/>
        </authorList>
    </citation>
    <scope>IDENTIFICATION BY MASS SPECTROMETRY [LARGE SCALE ANALYSIS]</scope>
    <source>
        <tissue>Liver</tissue>
    </source>
</reference>
<reference key="25">
    <citation type="journal article" date="2015" name="Proteomics">
        <title>N-terminome analysis of the human mitochondrial proteome.</title>
        <authorList>
            <person name="Vaca Jacome A.S."/>
            <person name="Rabilloud T."/>
            <person name="Schaeffer-Reiss C."/>
            <person name="Rompais M."/>
            <person name="Ayoub D."/>
            <person name="Lane L."/>
            <person name="Bairoch A."/>
            <person name="Van Dorsselaer A."/>
            <person name="Carapito C."/>
        </authorList>
    </citation>
    <scope>IDENTIFICATION BY MASS SPECTROMETRY [LARGE SCALE ANALYSIS]</scope>
</reference>
<reference key="26">
    <citation type="journal article" date="2018" name="Am. J. Hum. Genet.">
        <title>Mutations in ATP1A1 Cause Dominant Charcot-Marie-Tooth Type 2.</title>
        <authorList>
            <person name="Lassuthova P."/>
            <person name="Rebelo A.P."/>
            <person name="Ravenscroft G."/>
            <person name="Lamont P.J."/>
            <person name="Davis M.R."/>
            <person name="Manganelli F."/>
            <person name="Feely S.M."/>
            <person name="Bacon C."/>
            <person name="Brozkova D.S."/>
            <person name="Haberlova J."/>
            <person name="Mazanec R."/>
            <person name="Tao F."/>
            <person name="Saghira C."/>
            <person name="Abreu L."/>
            <person name="Courel S."/>
            <person name="Powell E."/>
            <person name="Buglo E."/>
            <person name="Bis D.M."/>
            <person name="Baxter M.F."/>
            <person name="Ong R.W."/>
            <person name="Marns L."/>
            <person name="Lee Y.C."/>
            <person name="Bai Y."/>
            <person name="Isom D.G."/>
            <person name="Barro-Soria R."/>
            <person name="Chung K.W."/>
            <person name="Scherer S.S."/>
            <person name="Larsson H.P."/>
            <person name="Laing N.G."/>
            <person name="Choi B.O."/>
            <person name="Seeman P."/>
            <person name="Shy M.E."/>
            <person name="Santoro L."/>
            <person name="Zuchner S."/>
        </authorList>
    </citation>
    <scope>INVOLVEMENT IN CMT2DD</scope>
    <scope>VARIANTS CMT2DD ARG-48; THR-592; THR-597; ALA-600; THR-600; PHE-601 AND ALA-811</scope>
    <scope>CHARACTERIZATION OF VARIANTS CMT2DD ARG-48; ALA-600 AND ALA-811</scope>
    <scope>FUNCTION</scope>
</reference>
<reference key="27">
    <citation type="journal article" date="2018" name="Am. J. Hum. Genet.">
        <title>Germline de novo mutations in ATP1A1 cause renal hypomagnesemia, refractory seizures, and intellectual disability.</title>
        <authorList>
            <person name="Schlingmann K.P."/>
            <person name="Bandulik S."/>
            <person name="Mammen C."/>
            <person name="Tarailo-Graovac M."/>
            <person name="Holm R."/>
            <person name="Baumann M."/>
            <person name="Koenig J."/>
            <person name="Lee J.J.Y."/>
            <person name="Droegemoeller B."/>
            <person name="Imminger K."/>
            <person name="Beck B.B."/>
            <person name="Altmueller J."/>
            <person name="Thiele H."/>
            <person name="Waldegger S."/>
            <person name="Van't Hoff W."/>
            <person name="Kleta R."/>
            <person name="Warth R."/>
            <person name="van Karnebeek C.D.M."/>
            <person name="Vilsen B."/>
            <person name="Bockenhauer D."/>
            <person name="Konrad M."/>
        </authorList>
    </citation>
    <scope>INVOLVEMENT IN HOMGSMR2</scope>
    <scope>VARIANTS HOMGSMR2 ARG-302; ARG-303 AND ARG-859</scope>
    <scope>CHARACTERIZATION OF VARIANTS HOMGSMR2 ARG-302; ARG-303 AND ARG-859</scope>
    <scope>FUNCTION</scope>
</reference>
<evidence type="ECO:0000250" key="1"/>
<evidence type="ECO:0000250" key="2">
    <source>
        <dbReference type="UniProtKB" id="P06685"/>
    </source>
</evidence>
<evidence type="ECO:0000250" key="3">
    <source>
        <dbReference type="UniProtKB" id="Q8VDN2"/>
    </source>
</evidence>
<evidence type="ECO:0000255" key="4"/>
<evidence type="ECO:0000256" key="5">
    <source>
        <dbReference type="SAM" id="MobiDB-lite"/>
    </source>
</evidence>
<evidence type="ECO:0000269" key="6">
    <source>
    </source>
</evidence>
<evidence type="ECO:0000269" key="7">
    <source>
    </source>
</evidence>
<evidence type="ECO:0000269" key="8">
    <source>
    </source>
</evidence>
<evidence type="ECO:0000269" key="9">
    <source>
    </source>
</evidence>
<evidence type="ECO:0000269" key="10">
    <source>
    </source>
</evidence>
<evidence type="ECO:0000269" key="11">
    <source>
    </source>
</evidence>
<evidence type="ECO:0000269" key="12">
    <source>
    </source>
</evidence>
<evidence type="ECO:0000303" key="13">
    <source>
    </source>
</evidence>
<evidence type="ECO:0000303" key="14">
    <source>
    </source>
</evidence>
<evidence type="ECO:0000305" key="15"/>
<evidence type="ECO:0000305" key="16">
    <source>
    </source>
</evidence>
<evidence type="ECO:0007744" key="17">
    <source>
    </source>
</evidence>
<evidence type="ECO:0007744" key="18">
    <source>
    </source>
</evidence>
<evidence type="ECO:0007829" key="19">
    <source>
        <dbReference type="PDB" id="7E1Z"/>
    </source>
</evidence>
<evidence type="ECO:0007829" key="20">
    <source>
        <dbReference type="PDB" id="7E20"/>
    </source>
</evidence>
<evidence type="ECO:0007829" key="21">
    <source>
        <dbReference type="PDB" id="7E21"/>
    </source>
</evidence>
<feature type="propeptide" id="PRO_0000002483">
    <location>
        <begin position="1"/>
        <end position="5"/>
    </location>
</feature>
<feature type="chain" id="PRO_0000002484" description="Sodium/potassium-transporting ATPase subunit alpha-1">
    <location>
        <begin position="6"/>
        <end position="1023"/>
    </location>
</feature>
<feature type="topological domain" description="Cytoplasmic" evidence="4">
    <location>
        <begin position="6"/>
        <end position="87"/>
    </location>
</feature>
<feature type="transmembrane region" description="Helical" evidence="4">
    <location>
        <begin position="88"/>
        <end position="108"/>
    </location>
</feature>
<feature type="topological domain" description="Extracellular" evidence="4">
    <location>
        <begin position="109"/>
        <end position="131"/>
    </location>
</feature>
<feature type="transmembrane region" description="Helical" evidence="4">
    <location>
        <begin position="132"/>
        <end position="152"/>
    </location>
</feature>
<feature type="topological domain" description="Cytoplasmic" evidence="4">
    <location>
        <begin position="153"/>
        <end position="288"/>
    </location>
</feature>
<feature type="transmembrane region" description="Helical" evidence="4">
    <location>
        <begin position="289"/>
        <end position="308"/>
    </location>
</feature>
<feature type="topological domain" description="Extracellular" evidence="4">
    <location>
        <begin position="309"/>
        <end position="320"/>
    </location>
</feature>
<feature type="transmembrane region" description="Helical" evidence="4">
    <location>
        <begin position="321"/>
        <end position="338"/>
    </location>
</feature>
<feature type="topological domain" description="Cytoplasmic" evidence="4">
    <location>
        <begin position="339"/>
        <end position="772"/>
    </location>
</feature>
<feature type="transmembrane region" description="Helical" evidence="4">
    <location>
        <begin position="773"/>
        <end position="792"/>
    </location>
</feature>
<feature type="topological domain" description="Extracellular" evidence="4">
    <location>
        <begin position="793"/>
        <end position="802"/>
    </location>
</feature>
<feature type="transmembrane region" description="Helical" evidence="4">
    <location>
        <begin position="803"/>
        <end position="823"/>
    </location>
</feature>
<feature type="topological domain" description="Cytoplasmic" evidence="4">
    <location>
        <begin position="824"/>
        <end position="843"/>
    </location>
</feature>
<feature type="transmembrane region" description="Helical" evidence="4">
    <location>
        <begin position="844"/>
        <end position="866"/>
    </location>
</feature>
<feature type="topological domain" description="Extracellular" evidence="4">
    <location>
        <begin position="867"/>
        <end position="918"/>
    </location>
</feature>
<feature type="transmembrane region" description="Helical" evidence="4">
    <location>
        <begin position="919"/>
        <end position="938"/>
    </location>
</feature>
<feature type="topological domain" description="Cytoplasmic" evidence="4">
    <location>
        <begin position="939"/>
        <end position="951"/>
    </location>
</feature>
<feature type="transmembrane region" description="Helical" evidence="4">
    <location>
        <begin position="952"/>
        <end position="970"/>
    </location>
</feature>
<feature type="topological domain" description="Extracellular" evidence="4">
    <location>
        <begin position="971"/>
        <end position="985"/>
    </location>
</feature>
<feature type="transmembrane region" description="Helical" evidence="4">
    <location>
        <begin position="986"/>
        <end position="1006"/>
    </location>
</feature>
<feature type="topological domain" description="Cytoplasmic" evidence="4">
    <location>
        <begin position="1007"/>
        <end position="1023"/>
    </location>
</feature>
<feature type="region of interest" description="Disordered" evidence="5">
    <location>
        <begin position="1"/>
        <end position="39"/>
    </location>
</feature>
<feature type="region of interest" description="Phosphoinositide-3 kinase binding" evidence="1">
    <location>
        <begin position="82"/>
        <end position="84"/>
    </location>
</feature>
<feature type="region of interest" description="Disordered" evidence="5">
    <location>
        <begin position="216"/>
        <end position="235"/>
    </location>
</feature>
<feature type="region of interest" description="Mediates interaction with SCN7A" evidence="3">
    <location>
        <begin position="596"/>
        <end position="717"/>
    </location>
</feature>
<feature type="compositionally biased region" description="Basic and acidic residues" evidence="5">
    <location>
        <begin position="1"/>
        <end position="11"/>
    </location>
</feature>
<feature type="compositionally biased region" description="Basic and acidic residues" evidence="5">
    <location>
        <begin position="28"/>
        <end position="39"/>
    </location>
</feature>
<feature type="active site" description="4-aspartylphosphate intermediate" evidence="1">
    <location>
        <position position="376"/>
    </location>
</feature>
<feature type="binding site" evidence="1">
    <location>
        <position position="487"/>
    </location>
    <ligand>
        <name>ATP</name>
        <dbReference type="ChEBI" id="CHEBI:30616"/>
    </ligand>
</feature>
<feature type="binding site" evidence="1">
    <location>
        <position position="717"/>
    </location>
    <ligand>
        <name>Mg(2+)</name>
        <dbReference type="ChEBI" id="CHEBI:18420"/>
    </ligand>
</feature>
<feature type="binding site" evidence="1">
    <location>
        <position position="721"/>
    </location>
    <ligand>
        <name>Mg(2+)</name>
        <dbReference type="ChEBI" id="CHEBI:18420"/>
    </ligand>
</feature>
<feature type="modified residue" description="N6-acetyllysine" evidence="3">
    <location>
        <position position="9"/>
    </location>
</feature>
<feature type="modified residue" description="Phosphotyrosine" evidence="2">
    <location>
        <position position="10"/>
    </location>
</feature>
<feature type="modified residue" description="Phosphoserine" evidence="18">
    <location>
        <position position="16"/>
    </location>
</feature>
<feature type="modified residue" description="N6-acetyllysine" evidence="3">
    <location>
        <position position="21"/>
    </location>
</feature>
<feature type="modified residue" description="Phosphoserine" evidence="2">
    <location>
        <position position="40"/>
    </location>
</feature>
<feature type="modified residue" description="Phosphoserine" evidence="2">
    <location>
        <position position="47"/>
    </location>
</feature>
<feature type="modified residue" description="Phosphoserine" evidence="3">
    <location>
        <position position="228"/>
    </location>
</feature>
<feature type="modified residue" description="Phosphotyrosine" evidence="3">
    <location>
        <position position="260"/>
    </location>
</feature>
<feature type="modified residue" description="Phosphoserine" evidence="2">
    <location>
        <position position="452"/>
    </location>
</feature>
<feature type="modified residue" description="Phosphoserine" evidence="2">
    <location>
        <position position="484"/>
    </location>
</feature>
<feature type="modified residue" description="Phosphotyrosine" evidence="17">
    <location>
        <position position="542"/>
    </location>
</feature>
<feature type="modified residue" description="N6-succinyllysine" evidence="3">
    <location>
        <position position="661"/>
    </location>
</feature>
<feature type="modified residue" description="Phosphoserine" evidence="3">
    <location>
        <position position="668"/>
    </location>
</feature>
<feature type="modified residue" description="Phosphoserine" evidence="3">
    <location>
        <position position="675"/>
    </location>
</feature>
<feature type="modified residue" description="Phosphoserine; by PKA" evidence="2">
    <location>
        <position position="943"/>
    </location>
</feature>
<feature type="splice variant" id="VSP_044242" description="In isoform 3." evidence="13">
    <location>
        <begin position="1"/>
        <end position="31"/>
    </location>
</feature>
<feature type="splice variant" id="VSP_047309" description="In isoform 4." evidence="13">
    <original>GKG</original>
    <variation>AFK</variation>
    <location>
        <begin position="2"/>
        <end position="4"/>
    </location>
</feature>
<feature type="splice variant" id="VSP_000415" description="In isoform 2." evidence="14">
    <original>NETVEDIAARLNIPVSQVNPRDAKACVVHGSDLKDMTSEQLDDI</original>
    <variation>SGPMSRGKSWSSPATQPSSSVSWWCSGPTWSSVRPGGIRSSSRG</variation>
    <location>
        <begin position="638"/>
        <end position="681"/>
    </location>
</feature>
<feature type="splice variant" id="VSP_000416" description="In isoform 2." evidence="14">
    <location>
        <begin position="682"/>
        <end position="1023"/>
    </location>
</feature>
<feature type="sequence variant" id="VAR_048374" description="In dbSNP:rs12564026.">
    <original>S</original>
    <variation>I</variation>
    <location>
        <position position="47"/>
    </location>
</feature>
<feature type="sequence variant" id="VAR_081039" description="In CMT2DD; no effect on Na(+)-dependent currents; dbSNP:rs1553190285." evidence="10">
    <original>L</original>
    <variation>R</variation>
    <location>
        <position position="48"/>
    </location>
</feature>
<feature type="sequence variant" id="VAR_081937" description="In HOMGSMR2; results in altered sodium and potassium transport as shown by in vitro functional expression of the homologous rat variant; dbSNP:rs1557785499." evidence="11">
    <original>L</original>
    <variation>R</variation>
    <location>
        <position position="302"/>
    </location>
</feature>
<feature type="sequence variant" id="VAR_081938" description="In HOMGSMR2; results in altered sodium and potassium transport as shown by in vitro functional expression of the homologous rat variant; dbSNP:rs1557785503." evidence="11">
    <original>G</original>
    <variation>R</variation>
    <location>
        <position position="303"/>
    </location>
</feature>
<feature type="sequence variant" id="VAR_081040" description="In CMT2DD; uncertain significance; dbSNP:rs1553192086." evidence="10">
    <original>I</original>
    <variation>T</variation>
    <location>
        <position position="592"/>
    </location>
</feature>
<feature type="sequence variant" id="VAR_081041" description="In CMT2DD; uncertain significance." evidence="10">
    <original>A</original>
    <variation>T</variation>
    <location>
        <position position="597"/>
    </location>
</feature>
<feature type="sequence variant" id="VAR_081042" description="In CMT2DD; shows fewer Na(+)-dependent currents than wild-type protein; dbSNP:rs1553192091." evidence="10">
    <original>P</original>
    <variation>A</variation>
    <location>
        <position position="600"/>
    </location>
</feature>
<feature type="sequence variant" id="VAR_081043" description="In CMT2DD; uncertain significance; dbSNP:rs1553192091." evidence="10">
    <original>P</original>
    <variation>T</variation>
    <location>
        <position position="600"/>
    </location>
</feature>
<feature type="sequence variant" id="VAR_081044" description="In CMT2DD; uncertain significance; requires 2 nucleotide substitutions." evidence="10">
    <original>D</original>
    <variation>F</variation>
    <location>
        <position position="601"/>
    </location>
</feature>
<feature type="sequence variant" id="VAR_081045" description="In CMT2DD; shows fewer Na(+)-dependent currents than wild-type protein; dbSNP:rs1553192783." evidence="10">
    <original>D</original>
    <variation>A</variation>
    <location>
        <position position="811"/>
    </location>
</feature>
<feature type="sequence variant" id="VAR_081939" description="In HOMGSMR2; results in altered sodium and potassium transport as shown by in vitro functional expression of the homologous rat variant; dbSNP:rs781629728." evidence="11">
    <original>M</original>
    <variation>R</variation>
    <location>
        <position position="859"/>
    </location>
</feature>
<feature type="sequence conflict" description="In Ref. 3; BAG37313." evidence="15" ref="3">
    <original>N</original>
    <variation>S</variation>
    <location>
        <position position="248"/>
    </location>
</feature>
<feature type="sequence conflict" description="In Ref. 3; BAH11971." evidence="15" ref="3">
    <original>F</original>
    <variation>L</variation>
    <location>
        <position position="323"/>
    </location>
</feature>
<feature type="sequence conflict" description="In Ref. 13; CAA27390." evidence="15" ref="13">
    <original>A</original>
    <variation>T</variation>
    <location>
        <position position="475"/>
    </location>
</feature>
<feature type="sequence conflict" description="In Ref. 13; CAA27390." evidence="15" ref="13">
    <original>S</original>
    <variation>A</variation>
    <location>
        <position position="499"/>
    </location>
</feature>
<feature type="sequence conflict" description="In Ref. 13; CAA27390." evidence="15" ref="13">
    <original>Q</original>
    <variation>R</variation>
    <location>
        <position position="502"/>
    </location>
</feature>
<feature type="sequence conflict" description="In Ref. 13; CAA27390." evidence="15" ref="13">
    <original>L</original>
    <variation>I</variation>
    <location>
        <position position="523"/>
    </location>
</feature>
<feature type="sequence conflict" description="In Ref. 3; BAH11971." evidence="15" ref="3">
    <original>D</original>
    <variation>G</variation>
    <location>
        <position position="892"/>
    </location>
</feature>
<feature type="helix" evidence="20">
    <location>
        <begin position="31"/>
        <end position="34"/>
    </location>
</feature>
<feature type="strand" evidence="20">
    <location>
        <begin position="35"/>
        <end position="37"/>
    </location>
</feature>
<feature type="helix" evidence="20">
    <location>
        <begin position="50"/>
        <end position="54"/>
    </location>
</feature>
<feature type="strand" evidence="21">
    <location>
        <begin position="55"/>
        <end position="57"/>
    </location>
</feature>
<feature type="turn" evidence="20">
    <location>
        <begin position="59"/>
        <end position="61"/>
    </location>
</feature>
<feature type="helix" evidence="20">
    <location>
        <begin position="65"/>
        <end position="75"/>
    </location>
</feature>
<feature type="helix" evidence="20">
    <location>
        <begin position="88"/>
        <end position="93"/>
    </location>
</feature>
<feature type="helix" evidence="20">
    <location>
        <begin position="95"/>
        <end position="97"/>
    </location>
</feature>
<feature type="helix" evidence="20">
    <location>
        <begin position="100"/>
        <end position="119"/>
    </location>
</feature>
<feature type="strand" evidence="21">
    <location>
        <begin position="122"/>
        <end position="124"/>
    </location>
</feature>
<feature type="helix" evidence="20">
    <location>
        <begin position="128"/>
        <end position="149"/>
    </location>
</feature>
<feature type="helix" evidence="20">
    <location>
        <begin position="157"/>
        <end position="161"/>
    </location>
</feature>
<feature type="strand" evidence="20">
    <location>
        <begin position="163"/>
        <end position="165"/>
    </location>
</feature>
<feature type="strand" evidence="20">
    <location>
        <begin position="171"/>
        <end position="173"/>
    </location>
</feature>
<feature type="strand" evidence="20">
    <location>
        <begin position="176"/>
        <end position="178"/>
    </location>
</feature>
<feature type="helix" evidence="20">
    <location>
        <begin position="182"/>
        <end position="184"/>
    </location>
</feature>
<feature type="strand" evidence="20">
    <location>
        <begin position="190"/>
        <end position="194"/>
    </location>
</feature>
<feature type="strand" evidence="20">
    <location>
        <begin position="201"/>
        <end position="209"/>
    </location>
</feature>
<feature type="strand" evidence="20">
    <location>
        <begin position="211"/>
        <end position="214"/>
    </location>
</feature>
<feature type="helix" evidence="20">
    <location>
        <begin position="216"/>
        <end position="219"/>
    </location>
</feature>
<feature type="strand" evidence="20">
    <location>
        <begin position="225"/>
        <end position="227"/>
    </location>
</feature>
<feature type="strand" evidence="20">
    <location>
        <begin position="240"/>
        <end position="243"/>
    </location>
</feature>
<feature type="strand" evidence="20">
    <location>
        <begin position="251"/>
        <end position="260"/>
    </location>
</feature>
<feature type="helix" evidence="20">
    <location>
        <begin position="262"/>
        <end position="264"/>
    </location>
</feature>
<feature type="helix" evidence="20">
    <location>
        <begin position="266"/>
        <end position="276"/>
    </location>
</feature>
<feature type="helix" evidence="20">
    <location>
        <begin position="283"/>
        <end position="305"/>
    </location>
</feature>
<feature type="helix" evidence="20">
    <location>
        <begin position="309"/>
        <end position="312"/>
    </location>
</feature>
<feature type="helix" evidence="20">
    <location>
        <begin position="317"/>
        <end position="329"/>
    </location>
</feature>
<feature type="helix" evidence="20">
    <location>
        <begin position="336"/>
        <end position="352"/>
    </location>
</feature>
<feature type="turn" evidence="20">
    <location>
        <begin position="353"/>
        <end position="355"/>
    </location>
</feature>
<feature type="strand" evidence="20">
    <location>
        <begin position="356"/>
        <end position="360"/>
    </location>
</feature>
<feature type="helix" evidence="20">
    <location>
        <begin position="363"/>
        <end position="366"/>
    </location>
</feature>
<feature type="strand" evidence="20">
    <location>
        <begin position="372"/>
        <end position="376"/>
    </location>
</feature>
<feature type="helix" evidence="20">
    <location>
        <begin position="377"/>
        <end position="381"/>
    </location>
</feature>
<feature type="strand" evidence="20">
    <location>
        <begin position="387"/>
        <end position="391"/>
    </location>
</feature>
<feature type="strand" evidence="21">
    <location>
        <begin position="404"/>
        <end position="407"/>
    </location>
</feature>
<feature type="helix" evidence="20">
    <location>
        <begin position="416"/>
        <end position="427"/>
    </location>
</feature>
<feature type="helix" evidence="20">
    <location>
        <begin position="442"/>
        <end position="444"/>
    </location>
</feature>
<feature type="strand" evidence="20">
    <location>
        <begin position="447"/>
        <end position="449"/>
    </location>
</feature>
<feature type="helix" evidence="20">
    <location>
        <begin position="451"/>
        <end position="463"/>
    </location>
</feature>
<feature type="helix" evidence="20">
    <location>
        <begin position="468"/>
        <end position="473"/>
    </location>
</feature>
<feature type="strand" evidence="20">
    <location>
        <begin position="476"/>
        <end position="480"/>
    </location>
</feature>
<feature type="turn" evidence="20">
    <location>
        <begin position="484"/>
        <end position="486"/>
    </location>
</feature>
<feature type="strand" evidence="20">
    <location>
        <begin position="488"/>
        <end position="493"/>
    </location>
</feature>
<feature type="strand" evidence="21">
    <location>
        <begin position="496"/>
        <end position="500"/>
    </location>
</feature>
<feature type="strand" evidence="20">
    <location>
        <begin position="502"/>
        <end position="509"/>
    </location>
</feature>
<feature type="helix" evidence="20">
    <location>
        <begin position="511"/>
        <end position="514"/>
    </location>
</feature>
<feature type="turn" evidence="21">
    <location>
        <begin position="515"/>
        <end position="517"/>
    </location>
</feature>
<feature type="strand" evidence="20">
    <location>
        <begin position="521"/>
        <end position="523"/>
    </location>
</feature>
<feature type="strand" evidence="20">
    <location>
        <begin position="526"/>
        <end position="528"/>
    </location>
</feature>
<feature type="helix" evidence="20">
    <location>
        <begin position="532"/>
        <end position="546"/>
    </location>
</feature>
<feature type="turn" evidence="20">
    <location>
        <begin position="547"/>
        <end position="549"/>
    </location>
</feature>
<feature type="strand" evidence="20">
    <location>
        <begin position="551"/>
        <end position="558"/>
    </location>
</feature>
<feature type="strand" evidence="20">
    <location>
        <begin position="562"/>
        <end position="564"/>
    </location>
</feature>
<feature type="strand" evidence="19">
    <location>
        <begin position="567"/>
        <end position="569"/>
    </location>
</feature>
<feature type="strand" evidence="20">
    <location>
        <begin position="573"/>
        <end position="575"/>
    </location>
</feature>
<feature type="strand" evidence="20">
    <location>
        <begin position="587"/>
        <end position="592"/>
    </location>
</feature>
<feature type="helix" evidence="20">
    <location>
        <begin position="599"/>
        <end position="608"/>
    </location>
</feature>
<feature type="strand" evidence="20">
    <location>
        <begin position="612"/>
        <end position="616"/>
    </location>
</feature>
<feature type="helix" evidence="20">
    <location>
        <begin position="621"/>
        <end position="630"/>
    </location>
</feature>
<feature type="helix" evidence="20">
    <location>
        <begin position="641"/>
        <end position="647"/>
    </location>
</feature>
<feature type="helix" evidence="20">
    <location>
        <begin position="652"/>
        <end position="654"/>
    </location>
</feature>
<feature type="strand" evidence="20">
    <location>
        <begin position="661"/>
        <end position="666"/>
    </location>
</feature>
<feature type="helix" evidence="20">
    <location>
        <begin position="668"/>
        <end position="671"/>
    </location>
</feature>
<feature type="helix" evidence="20">
    <location>
        <begin position="675"/>
        <end position="684"/>
    </location>
</feature>
<feature type="strand" evidence="20">
    <location>
        <begin position="686"/>
        <end position="692"/>
    </location>
</feature>
<feature type="helix" evidence="20">
    <location>
        <begin position="695"/>
        <end position="707"/>
    </location>
</feature>
<feature type="strand" evidence="20">
    <location>
        <begin position="712"/>
        <end position="716"/>
    </location>
</feature>
<feature type="helix" evidence="20">
    <location>
        <begin position="719"/>
        <end position="721"/>
    </location>
</feature>
<feature type="helix" evidence="20">
    <location>
        <begin position="722"/>
        <end position="727"/>
    </location>
</feature>
<feature type="strand" evidence="20">
    <location>
        <begin position="728"/>
        <end position="737"/>
    </location>
</feature>
<feature type="turn" evidence="20">
    <location>
        <begin position="740"/>
        <end position="744"/>
    </location>
</feature>
<feature type="strand" evidence="20">
    <location>
        <begin position="747"/>
        <end position="750"/>
    </location>
</feature>
<feature type="helix" evidence="20">
    <location>
        <begin position="756"/>
        <end position="781"/>
    </location>
</feature>
<feature type="helix" evidence="20">
    <location>
        <begin position="784"/>
        <end position="795"/>
    </location>
</feature>
<feature type="helix" evidence="20">
    <location>
        <begin position="805"/>
        <end position="811"/>
    </location>
</feature>
<feature type="turn" evidence="20">
    <location>
        <begin position="812"/>
        <end position="815"/>
    </location>
</feature>
<feature type="helix" evidence="20">
    <location>
        <begin position="816"/>
        <end position="820"/>
    </location>
</feature>
<feature type="helix" evidence="20">
    <location>
        <begin position="821"/>
        <end position="824"/>
    </location>
</feature>
<feature type="helix" evidence="20">
    <location>
        <begin position="831"/>
        <end position="833"/>
    </location>
</feature>
<feature type="strand" evidence="20">
    <location>
        <begin position="839"/>
        <end position="842"/>
    </location>
</feature>
<feature type="helix" evidence="20">
    <location>
        <begin position="847"/>
        <end position="855"/>
    </location>
</feature>
<feature type="helix" evidence="20">
    <location>
        <begin position="857"/>
        <end position="876"/>
    </location>
</feature>
<feature type="turn" evidence="20">
    <location>
        <begin position="880"/>
        <end position="885"/>
    </location>
</feature>
<feature type="helix" evidence="20">
    <location>
        <begin position="887"/>
        <end position="891"/>
    </location>
</feature>
<feature type="helix" evidence="20">
    <location>
        <begin position="908"/>
        <end position="936"/>
    </location>
</feature>
<feature type="strand" evidence="20">
    <location>
        <begin position="940"/>
        <end position="942"/>
    </location>
</feature>
<feature type="helix" evidence="20">
    <location>
        <begin position="944"/>
        <end position="947"/>
    </location>
</feature>
<feature type="helix" evidence="20">
    <location>
        <begin position="952"/>
        <end position="970"/>
    </location>
</feature>
<feature type="helix" evidence="20">
    <location>
        <begin position="974"/>
        <end position="977"/>
    </location>
</feature>
<feature type="helix" evidence="20">
    <location>
        <begin position="985"/>
        <end position="989"/>
    </location>
</feature>
<feature type="helix" evidence="20">
    <location>
        <begin position="992"/>
        <end position="1011"/>
    </location>
</feature>
<feature type="helix" evidence="20">
    <location>
        <begin position="1016"/>
        <end position="1021"/>
    </location>
</feature>
<name>AT1A1_HUMAN</name>
<organism>
    <name type="scientific">Homo sapiens</name>
    <name type="common">Human</name>
    <dbReference type="NCBI Taxonomy" id="9606"/>
    <lineage>
        <taxon>Eukaryota</taxon>
        <taxon>Metazoa</taxon>
        <taxon>Chordata</taxon>
        <taxon>Craniata</taxon>
        <taxon>Vertebrata</taxon>
        <taxon>Euteleostomi</taxon>
        <taxon>Mammalia</taxon>
        <taxon>Eutheria</taxon>
        <taxon>Euarchontoglires</taxon>
        <taxon>Primates</taxon>
        <taxon>Haplorrhini</taxon>
        <taxon>Catarrhini</taxon>
        <taxon>Hominidae</taxon>
        <taxon>Homo</taxon>
    </lineage>
</organism>
<gene>
    <name type="primary">ATP1A1</name>
</gene>
<sequence>MGKGVGRDKYEPAAVSEQGDKKGKKGKKDRDMDELKKEVSMDDHKLSLDELHRKYGTDLSRGLTSARAAEILARDGPNALTPPPTTPEWIKFCRQLFGGFSMLLWIGAILCFLAYSIQAATEEEPQNDNLYLGVVLSAVVIITGCFSYYQEAKSSKIMESFKNMVPQQALVIRNGEKMSINAEEVVVGDLVEVKGGDRIPADLRIISANGCKVDNSSLTGESEPQTRSPDFTNENPLETRNIAFFSTNCVEGTARGIVVYTGDRTVMGRIATLASGLEGGQTPIAAEIEHFIHIITGVAVFLGVSFFILSLILEYTWLEAVIFLIGIIVANVPEGLLATVTVCLTLTAKRMARKNCLVKNLEAVETLGSTSTICSDKTGTLTQNRMTVAHMWFDNQIHEADTTENQSGVSFDKTSATWLALSRIAGLCNRAVFQANQENLPILKRAVAGDASESALLKCIELCCGSVKEMRERYAKIVEIPFNSTNKYQLSIHKNPNTSEPQHLLVMKGAPERILDRCSSILLHGKEQPLDEELKDAFQNAYLELGGLGERVLGFCHLFLPDEQFPEGFQFDTDDVNFPIDNLCFVGLISMIDPPRAAVPDAVGKCRSAGIKVIMVTGDHPITAKAIAKGVGIISEGNETVEDIAARLNIPVSQVNPRDAKACVVHGSDLKDMTSEQLDDILKYHTEIVFARTSPQQKLIIVEGCQRQGAIVAVTGDGVNDSPALKKADIGVAMGIAGSDVSKQAADMILLDDNFASIVTGVEEGRLIFDNLKKSIAYTLTSNIPEITPFLIFIIANIPLPLGTVTILCIDLGTDMVPAISLAYEQAESDIMKRQPRNPKTDKLVNERLISMAYGQIGMIQALGGFFTYFVILAENGFLPIHLLGLRVDWDDRWINDVEDSYGQQWTYEQRKIVEFTCHTAFFVSIVVVQWADLVICKTRRNSVFQQGMKNKILIFGLFEETALAAFLSYCPGMGVALRMYPLKPTWWFCAFPYSLLIFVYDEVRKLIIRRRPGGWVEKETYY</sequence>